<organism>
    <name type="scientific">Homo sapiens</name>
    <name type="common">Human</name>
    <dbReference type="NCBI Taxonomy" id="9606"/>
    <lineage>
        <taxon>Eukaryota</taxon>
        <taxon>Metazoa</taxon>
        <taxon>Chordata</taxon>
        <taxon>Craniata</taxon>
        <taxon>Vertebrata</taxon>
        <taxon>Euteleostomi</taxon>
        <taxon>Mammalia</taxon>
        <taxon>Eutheria</taxon>
        <taxon>Euarchontoglires</taxon>
        <taxon>Primates</taxon>
        <taxon>Haplorrhini</taxon>
        <taxon>Catarrhini</taxon>
        <taxon>Hominidae</taxon>
        <taxon>Homo</taxon>
    </lineage>
</organism>
<protein>
    <recommendedName>
        <fullName>Protein-tyrosine kinase 2-beta</fullName>
        <ecNumber>2.7.10.2</ecNumber>
    </recommendedName>
    <alternativeName>
        <fullName>Calcium-dependent tyrosine kinase</fullName>
        <shortName>CADTK</shortName>
    </alternativeName>
    <alternativeName>
        <fullName>Calcium-regulated non-receptor proline-rich tyrosine kinase</fullName>
    </alternativeName>
    <alternativeName>
        <fullName>Cell adhesion kinase beta</fullName>
        <shortName>CAK-beta</shortName>
        <shortName>CAKB</shortName>
    </alternativeName>
    <alternativeName>
        <fullName>Focal adhesion kinase 2</fullName>
        <shortName>FADK 2</shortName>
    </alternativeName>
    <alternativeName>
        <fullName>Proline-rich tyrosine kinase 2</fullName>
    </alternativeName>
    <alternativeName>
        <fullName>Related adhesion focal tyrosine kinase</fullName>
        <shortName>RAFTK</shortName>
    </alternativeName>
</protein>
<feature type="chain" id="PRO_0000088081" description="Protein-tyrosine kinase 2-beta">
    <location>
        <begin position="1"/>
        <end position="1009"/>
    </location>
</feature>
<feature type="domain" description="FERM" evidence="4">
    <location>
        <begin position="39"/>
        <end position="359"/>
    </location>
</feature>
<feature type="domain" description="Protein kinase" evidence="5">
    <location>
        <begin position="425"/>
        <end position="683"/>
    </location>
</feature>
<feature type="region of interest" description="Disordered" evidence="7">
    <location>
        <begin position="701"/>
        <end position="725"/>
    </location>
</feature>
<feature type="region of interest" description="Interaction with TGFB1I1" evidence="1">
    <location>
        <begin position="801"/>
        <end position="1009"/>
    </location>
</feature>
<feature type="region of interest" description="Focal adhesion targeting (FAT)">
    <location>
        <begin position="868"/>
        <end position="1009"/>
    </location>
</feature>
<feature type="compositionally biased region" description="Pro residues" evidence="7">
    <location>
        <begin position="712"/>
        <end position="725"/>
    </location>
</feature>
<feature type="active site" description="Proton acceptor" evidence="5 6">
    <location>
        <position position="549"/>
    </location>
</feature>
<feature type="binding site" evidence="26 44">
    <location>
        <begin position="431"/>
        <end position="439"/>
    </location>
    <ligand>
        <name>ATP</name>
        <dbReference type="ChEBI" id="CHEBI:30616"/>
    </ligand>
</feature>
<feature type="binding site" evidence="26 44">
    <location>
        <position position="457"/>
    </location>
    <ligand>
        <name>ATP</name>
        <dbReference type="ChEBI" id="CHEBI:30616"/>
    </ligand>
</feature>
<feature type="binding site" evidence="26 44">
    <location>
        <begin position="503"/>
        <end position="509"/>
    </location>
    <ligand>
        <name>ATP</name>
        <dbReference type="ChEBI" id="CHEBI:30616"/>
    </ligand>
</feature>
<feature type="modified residue" description="Phosphoserine" evidence="47">
    <location>
        <position position="361"/>
    </location>
</feature>
<feature type="modified residue" description="Phosphoserine" evidence="45 46 47 48">
    <location>
        <position position="375"/>
    </location>
</feature>
<feature type="modified residue" description="Phosphoserine" evidence="47">
    <location>
        <position position="399"/>
    </location>
</feature>
<feature type="modified residue" description="Phosphotyrosine; by autocatalysis" evidence="10 15 16 25 32 33 34">
    <location>
        <position position="402"/>
    </location>
</feature>
<feature type="modified residue" description="Phosphotyrosine" evidence="3">
    <location>
        <position position="579"/>
    </location>
</feature>
<feature type="modified residue" description="Phosphotyrosine; by SRC, FYN and LCK" evidence="32 33">
    <location>
        <position position="580"/>
    </location>
</feature>
<feature type="modified residue" description="Phosphotyrosine" evidence="47">
    <location>
        <position position="722"/>
    </location>
</feature>
<feature type="modified residue" description="Phosphoserine" evidence="47">
    <location>
        <position position="762"/>
    </location>
</feature>
<feature type="modified residue" description="Phosphothreonine" evidence="46">
    <location>
        <position position="765"/>
    </location>
</feature>
<feature type="modified residue" description="Phosphotyrosine" evidence="47">
    <location>
        <position position="819"/>
    </location>
</feature>
<feature type="modified residue" description="Phosphotyrosine" evidence="47">
    <location>
        <position position="834"/>
    </location>
</feature>
<feature type="modified residue" description="Phosphoserine" evidence="46 47">
    <location>
        <position position="839"/>
    </location>
</feature>
<feature type="modified residue" description="Phosphothreonine" evidence="46 47 48">
    <location>
        <position position="842"/>
    </location>
</feature>
<feature type="modified residue" description="Phosphotyrosine" evidence="47">
    <location>
        <position position="849"/>
    </location>
</feature>
<feature type="modified residue" description="Phosphoserine" evidence="47">
    <location>
        <position position="866"/>
    </location>
</feature>
<feature type="modified residue" description="Phosphotyrosine; by SRC" evidence="34">
    <location>
        <position position="881"/>
    </location>
</feature>
<feature type="splice variant" id="VSP_004981" description="In isoform 2." evidence="42">
    <location>
        <begin position="739"/>
        <end position="780"/>
    </location>
</feature>
<feature type="sequence variant" id="VAR_041687" description="In dbSNP:rs56175011." evidence="17">
    <original>Q</original>
    <variation>E</variation>
    <location>
        <position position="359"/>
    </location>
</feature>
<feature type="sequence variant" id="VAR_041688" description="In dbSNP:rs35174236." evidence="17">
    <original>R</original>
    <variation>H</variation>
    <location>
        <position position="698"/>
    </location>
</feature>
<feature type="sequence variant" id="VAR_041689" description="In dbSNP:rs55747955." evidence="17">
    <original>L</original>
    <variation>P</variation>
    <location>
        <position position="808"/>
    </location>
</feature>
<feature type="sequence variant" id="VAR_020284" description="In dbSNP:rs751019." evidence="17 47">
    <original>K</original>
    <variation>T</variation>
    <location>
        <position position="838"/>
    </location>
</feature>
<feature type="sequence variant" id="VAR_041690" description="In dbSNP:rs56263944." evidence="17">
    <original>E</original>
    <variation>K</variation>
    <location>
        <position position="970"/>
    </location>
</feature>
<feature type="mutagenesis site" description="Abolishes autophosphorylation. Abolishes interaction with SRC." evidence="39">
    <original>Y</original>
    <variation>F</variation>
    <location>
        <position position="402"/>
    </location>
</feature>
<feature type="mutagenesis site" description="Abolishes kinase activity." evidence="15">
    <original>K</original>
    <variation>A</variation>
    <location>
        <position position="457"/>
    </location>
</feature>
<feature type="mutagenesis site" description="Loss of interaction with NPHP1." evidence="10">
    <original>P</original>
    <variation>A</variation>
    <location>
        <position position="859"/>
    </location>
</feature>
<feature type="mutagenesis site" description="Loss of phosphorylation site. Strongly reduced interaction with GRB2." evidence="34">
    <original>Y</original>
    <variation>F</variation>
    <location>
        <position position="881"/>
    </location>
</feature>
<feature type="sequence conflict" description="In Ref. 3; BAA08289/AAC05330." evidence="43" ref="3">
    <original>A</original>
    <variation>G</variation>
    <location>
        <position position="23"/>
    </location>
</feature>
<feature type="sequence conflict" description="In Ref. 2; AAB47217." evidence="43" ref="2">
    <original>G</original>
    <variation>P</variation>
    <location>
        <position position="256"/>
    </location>
</feature>
<feature type="sequence conflict" description="In Ref. 3; AAC05330." evidence="43" ref="3">
    <original>F</original>
    <variation>L</variation>
    <location>
        <position position="435"/>
    </location>
</feature>
<feature type="sequence conflict" description="In Ref. 2; AAB47217." evidence="43" ref="2">
    <original>R</original>
    <variation>G</variation>
    <location>
        <position position="780"/>
    </location>
</feature>
<feature type="sequence conflict" description="In Ref. 8; AAH36651." evidence="43" ref="8">
    <original>V</original>
    <variation>M</variation>
    <location>
        <position position="985"/>
    </location>
</feature>
<feature type="helix" evidence="53">
    <location>
        <begin position="35"/>
        <end position="37"/>
    </location>
</feature>
<feature type="strand" evidence="53">
    <location>
        <begin position="38"/>
        <end position="45"/>
    </location>
</feature>
<feature type="strand" evidence="53">
    <location>
        <begin position="48"/>
        <end position="50"/>
    </location>
</feature>
<feature type="helix" evidence="53">
    <location>
        <begin position="52"/>
        <end position="54"/>
    </location>
</feature>
<feature type="strand" evidence="53">
    <location>
        <begin position="55"/>
        <end position="62"/>
    </location>
</feature>
<feature type="helix" evidence="53">
    <location>
        <begin position="67"/>
        <end position="76"/>
    </location>
</feature>
<feature type="turn" evidence="53">
    <location>
        <begin position="77"/>
        <end position="80"/>
    </location>
</feature>
<feature type="helix" evidence="53">
    <location>
        <begin position="87"/>
        <end position="89"/>
    </location>
</feature>
<feature type="strand" evidence="53">
    <location>
        <begin position="90"/>
        <end position="99"/>
    </location>
</feature>
<feature type="strand" evidence="53">
    <location>
        <begin position="102"/>
        <end position="105"/>
    </location>
</feature>
<feature type="helix" evidence="53">
    <location>
        <begin position="111"/>
        <end position="117"/>
    </location>
</feature>
<feature type="turn" evidence="53">
    <location>
        <begin position="119"/>
        <end position="121"/>
    </location>
</feature>
<feature type="helix" evidence="53">
    <location>
        <begin position="124"/>
        <end position="126"/>
    </location>
</feature>
<feature type="strand" evidence="53">
    <location>
        <begin position="127"/>
        <end position="133"/>
    </location>
</feature>
<feature type="turn" evidence="53">
    <location>
        <begin position="138"/>
        <end position="140"/>
    </location>
</feature>
<feature type="helix" evidence="53">
    <location>
        <begin position="141"/>
        <end position="144"/>
    </location>
</feature>
<feature type="helix" evidence="53">
    <location>
        <begin position="148"/>
        <end position="165"/>
    </location>
</feature>
<feature type="turn" evidence="53">
    <location>
        <begin position="166"/>
        <end position="169"/>
    </location>
</feature>
<feature type="helix" evidence="53">
    <location>
        <begin position="172"/>
        <end position="186"/>
    </location>
</feature>
<feature type="turn" evidence="53">
    <location>
        <begin position="187"/>
        <end position="189"/>
    </location>
</feature>
<feature type="helix" evidence="53">
    <location>
        <begin position="194"/>
        <end position="196"/>
    </location>
</feature>
<feature type="helix" evidence="53">
    <location>
        <begin position="198"/>
        <end position="207"/>
    </location>
</feature>
<feature type="helix" evidence="53">
    <location>
        <begin position="210"/>
        <end position="212"/>
    </location>
</feature>
<feature type="helix" evidence="53">
    <location>
        <begin position="216"/>
        <end position="221"/>
    </location>
</feature>
<feature type="helix" evidence="53">
    <location>
        <begin position="224"/>
        <end position="238"/>
    </location>
</feature>
<feature type="helix" evidence="53">
    <location>
        <begin position="243"/>
        <end position="254"/>
    </location>
</feature>
<feature type="strand" evidence="53">
    <location>
        <begin position="263"/>
        <end position="273"/>
    </location>
</feature>
<feature type="strand" evidence="53">
    <location>
        <begin position="277"/>
        <end position="282"/>
    </location>
</feature>
<feature type="strand" evidence="53">
    <location>
        <begin position="285"/>
        <end position="289"/>
    </location>
</feature>
<feature type="strand" evidence="53">
    <location>
        <begin position="297"/>
        <end position="300"/>
    </location>
</feature>
<feature type="helix" evidence="53">
    <location>
        <begin position="302"/>
        <end position="304"/>
    </location>
</feature>
<feature type="strand" evidence="53">
    <location>
        <begin position="310"/>
        <end position="313"/>
    </location>
</feature>
<feature type="turn" evidence="53">
    <location>
        <begin position="314"/>
        <end position="316"/>
    </location>
</feature>
<feature type="strand" evidence="53">
    <location>
        <begin position="317"/>
        <end position="322"/>
    </location>
</feature>
<feature type="strand" evidence="53">
    <location>
        <begin position="331"/>
        <end position="336"/>
    </location>
</feature>
<feature type="helix" evidence="53">
    <location>
        <begin position="338"/>
        <end position="355"/>
    </location>
</feature>
<feature type="strand" evidence="53">
    <location>
        <begin position="356"/>
        <end position="360"/>
    </location>
</feature>
<feature type="helix" evidence="49">
    <location>
        <begin position="422"/>
        <end position="424"/>
    </location>
</feature>
<feature type="strand" evidence="49">
    <location>
        <begin position="425"/>
        <end position="433"/>
    </location>
</feature>
<feature type="strand" evidence="49">
    <location>
        <begin position="435"/>
        <end position="445"/>
    </location>
</feature>
<feature type="strand" evidence="51">
    <location>
        <begin position="447"/>
        <end position="449"/>
    </location>
</feature>
<feature type="strand" evidence="49">
    <location>
        <begin position="451"/>
        <end position="458"/>
    </location>
</feature>
<feature type="strand" evidence="50">
    <location>
        <begin position="461"/>
        <end position="463"/>
    </location>
</feature>
<feature type="helix" evidence="49">
    <location>
        <begin position="465"/>
        <end position="481"/>
    </location>
</feature>
<feature type="strand" evidence="49">
    <location>
        <begin position="489"/>
        <end position="493"/>
    </location>
</feature>
<feature type="strand" evidence="49">
    <location>
        <begin position="495"/>
        <end position="497"/>
    </location>
</feature>
<feature type="strand" evidence="49">
    <location>
        <begin position="499"/>
        <end position="503"/>
    </location>
</feature>
<feature type="helix" evidence="49">
    <location>
        <begin position="510"/>
        <end position="517"/>
    </location>
</feature>
<feature type="turn" evidence="49">
    <location>
        <begin position="518"/>
        <end position="520"/>
    </location>
</feature>
<feature type="helix" evidence="49">
    <location>
        <begin position="523"/>
        <end position="542"/>
    </location>
</feature>
<feature type="strand" evidence="55">
    <location>
        <begin position="546"/>
        <end position="548"/>
    </location>
</feature>
<feature type="helix" evidence="49">
    <location>
        <begin position="552"/>
        <end position="554"/>
    </location>
</feature>
<feature type="strand" evidence="49">
    <location>
        <begin position="555"/>
        <end position="559"/>
    </location>
</feature>
<feature type="strand" evidence="49">
    <location>
        <begin position="562"/>
        <end position="565"/>
    </location>
</feature>
<feature type="helix" evidence="49">
    <location>
        <begin position="570"/>
        <end position="572"/>
    </location>
</feature>
<feature type="helix" evidence="49">
    <location>
        <begin position="589"/>
        <end position="591"/>
    </location>
</feature>
<feature type="helix" evidence="49">
    <location>
        <begin position="594"/>
        <end position="599"/>
    </location>
</feature>
<feature type="helix" evidence="49">
    <location>
        <begin position="604"/>
        <end position="619"/>
    </location>
</feature>
<feature type="turn" evidence="49">
    <location>
        <begin position="620"/>
        <end position="622"/>
    </location>
</feature>
<feature type="turn" evidence="49">
    <location>
        <begin position="625"/>
        <end position="628"/>
    </location>
</feature>
<feature type="helix" evidence="49">
    <location>
        <begin position="631"/>
        <end position="633"/>
    </location>
</feature>
<feature type="helix" evidence="49">
    <location>
        <begin position="634"/>
        <end position="640"/>
    </location>
</feature>
<feature type="helix" evidence="49">
    <location>
        <begin position="652"/>
        <end position="661"/>
    </location>
</feature>
<feature type="helix" evidence="49">
    <location>
        <begin position="666"/>
        <end position="668"/>
    </location>
</feature>
<feature type="helix" evidence="49">
    <location>
        <begin position="672"/>
        <end position="691"/>
    </location>
</feature>
<feature type="helix" evidence="54">
    <location>
        <begin position="879"/>
        <end position="897"/>
    </location>
</feature>
<feature type="helix" evidence="52">
    <location>
        <begin position="898"/>
        <end position="900"/>
    </location>
</feature>
<feature type="helix" evidence="54">
    <location>
        <begin position="903"/>
        <end position="905"/>
    </location>
</feature>
<feature type="helix" evidence="54">
    <location>
        <begin position="906"/>
        <end position="927"/>
    </location>
</feature>
<feature type="helix" evidence="54">
    <location>
        <begin position="928"/>
        <end position="930"/>
    </location>
</feature>
<feature type="helix" evidence="54">
    <location>
        <begin position="933"/>
        <end position="962"/>
    </location>
</feature>
<feature type="turn" evidence="54">
    <location>
        <begin position="963"/>
        <end position="965"/>
    </location>
</feature>
<feature type="helix" evidence="54">
    <location>
        <begin position="969"/>
        <end position="1004"/>
    </location>
</feature>
<name>FAK2_HUMAN</name>
<accession>Q14289</accession>
<accession>D3DST0</accession>
<accession>Q13475</accession>
<accession>Q14290</accession>
<accession>Q16709</accession>
<accession>Q6PID4</accession>
<keyword id="KW-0002">3D-structure</keyword>
<keyword id="KW-1064">Adaptive immunity</keyword>
<keyword id="KW-0025">Alternative splicing</keyword>
<keyword id="KW-0037">Angiogenesis</keyword>
<keyword id="KW-0067">ATP-binding</keyword>
<keyword id="KW-0965">Cell junction</keyword>
<keyword id="KW-1003">Cell membrane</keyword>
<keyword id="KW-0966">Cell projection</keyword>
<keyword id="KW-0963">Cytoplasm</keyword>
<keyword id="KW-0391">Immunity</keyword>
<keyword id="KW-0418">Kinase</keyword>
<keyword id="KW-0472">Membrane</keyword>
<keyword id="KW-0547">Nucleotide-binding</keyword>
<keyword id="KW-0539">Nucleus</keyword>
<keyword id="KW-0597">Phosphoprotein</keyword>
<keyword id="KW-1267">Proteomics identification</keyword>
<keyword id="KW-1185">Reference proteome</keyword>
<keyword id="KW-0808">Transferase</keyword>
<keyword id="KW-0829">Tyrosine-protein kinase</keyword>
<proteinExistence type="evidence at protein level"/>
<comment type="function">
    <text evidence="8 11 12 13 14 15 18 19 20 21 22 24 25 26 28 29 30 31 33 34 35 36 37 38 39">Non-receptor protein-tyrosine kinase that regulates reorganization of the actin cytoskeleton, cell polarization, cell migration, adhesion, spreading and bone remodeling. Plays a role in the regulation of the humoral immune response, and is required for normal levels of marginal B-cells in the spleen and normal migration of splenic B-cells. Required for normal macrophage polarization and migration towards sites of inflammation. Regulates cytoskeleton rearrangement and cell spreading in T-cells, and contributes to the regulation of T-cell responses. Promotes osteoclastic bone resorption; this requires both PTK2B/PYK2 and SRC. May inhibit differentiation and activity of osteoprogenitor cells. Functions in signaling downstream of integrin and collagen receptors, immune receptors, G-protein coupled receptors (GPCR), cytokine, chemokine and growth factor receptors, and mediates responses to cellular stress. Forms multisubunit signaling complexes with SRC and SRC family members upon activation; this leads to the phosphorylation of additional tyrosine residues, creating binding sites for scaffold proteins, effectors and substrates. Regulates numerous signaling pathways. Promotes activation of phosphatidylinositol 3-kinase and of the AKT1 signaling cascade. Promotes activation of NOS3. Regulates production of the cellular messenger cGMP. Promotes activation of the MAP kinase signaling cascade, including activation of MAPK1/ERK2, MAPK3/ERK1 and MAPK8/JNK1. Promotes activation of Rho family GTPases, such as RHOA and RAC1. Recruits the ubiquitin ligase MDM2 to P53/TP53 in the nucleus, and thereby regulates P53/TP53 activity, P53/TP53 ubiquitination and proteasomal degradation. Acts as a scaffold, binding to both PDPK1 and SRC, thereby allowing SRC to phosphorylate PDPK1 at 'Tyr-9, 'Tyr-373', and 'Tyr-376'. Promotes phosphorylation of NMDA receptors by SRC family members, and thereby contributes to the regulation of NMDA receptor ion channel activity and intracellular Ca(2+) levels. May also regulate potassium ion transport by phosphorylation of potassium channel subunits. Phosphorylates SRC; this increases SRC kinase activity. Phosphorylates ASAP1, NPHP1, KCNA2 and SHC1. Promotes phosphorylation of ASAP2, RHOU and PXN; this requires both SRC and PTK2/PYK2.</text>
</comment>
<comment type="catalytic activity">
    <reaction evidence="6 14 15 20 23 28 29">
        <text>L-tyrosyl-[protein] + ATP = O-phospho-L-tyrosyl-[protein] + ADP + H(+)</text>
        <dbReference type="Rhea" id="RHEA:10596"/>
        <dbReference type="Rhea" id="RHEA-COMP:10136"/>
        <dbReference type="Rhea" id="RHEA-COMP:20101"/>
        <dbReference type="ChEBI" id="CHEBI:15378"/>
        <dbReference type="ChEBI" id="CHEBI:30616"/>
        <dbReference type="ChEBI" id="CHEBI:46858"/>
        <dbReference type="ChEBI" id="CHEBI:61978"/>
        <dbReference type="ChEBI" id="CHEBI:456216"/>
        <dbReference type="EC" id="2.7.10.2"/>
    </reaction>
</comment>
<comment type="activity regulation">
    <text evidence="20 23 28 29">Activated in response to stimuli that lead to increased intracellular Ca(2+) levels; this activation is indirect and may be mediated by calcium-mediated production of reactive oxygen species (ROS). Activated by autophosphorylation at Tyr-402; this creates a binding site for SRC family kinases and leads to phosphorylation at additional tyrosine residues. Phosphorylation at Tyr-402, Tyr-579 and Tyr-580 is required for optimal kinase activity. Inhibited by PF-562,271, BIRB796, PF-4618433 and by PF-431396, PF-2318841 and their derivatives. Inhibited by sulfoximine-substituted trifluoromethylpyrimidines. Inhibited by 4-amino and 5-aryl substituted pyridinone compounds.</text>
</comment>
<comment type="subunit">
    <text evidence="2 3 8 9 10 11 12 13 16 18 19 21 22 23 24 25 27 28 34 35 37 39 40">Homodimer, or homooligomer. Interacts with SIRPA and SH2D3C. Interacts with ARHGAP10. Interacts with DLG4 (By similarity). Interacts with KCNA2 (By similarity). Interacts with NPHP1, ASAP1, ASAP2, ARHGAP26, SKAP2 and TGFB1I1. The Tyr-402 phosphorylated form interacts with SRC (via SH2 domain) and SRC family members. Forms a signaling complex with EPHA1, LCK and phosphatidylinositol 3-kinase; upon activation by EFNA1. Interacts with GRB2 (via SH2 domain). Interacts with P53/TP53 and MDM2. Interacts with MYLK. Interacts with BCAR1. Interacts with PDPK1. Interacts (hypophosphorylated) with PXN. Interacts with RB1CC1. Interacts with RHOU. Interacts with VAV1. Interacts with LPXN and PTPN12.</text>
</comment>
<comment type="interaction">
    <interactant intactId="EBI-298640">
        <id>Q14289</id>
    </interactant>
    <interactant intactId="EBI-77613">
        <id>P05067</id>
        <label>APP</label>
    </interactant>
    <organismsDiffer>false</organismsDiffer>
    <experiments>3</experiments>
</comment>
<comment type="interaction">
    <interactant intactId="EBI-298640">
        <id>Q14289</id>
    </interactant>
    <interactant intactId="EBI-515315">
        <id>P06241</id>
        <label>FYN</label>
    </interactant>
    <organismsDiffer>false</organismsDiffer>
    <experiments>5</experiments>
</comment>
<comment type="interaction">
    <interactant intactId="EBI-298640">
        <id>Q14289</id>
    </interactant>
    <interactant intactId="EBI-953828">
        <id>O15259</id>
        <label>NPHP1</label>
    </interactant>
    <organismsDiffer>false</organismsDiffer>
    <experiments>2</experiments>
</comment>
<comment type="interaction">
    <interactant intactId="EBI-298640">
        <id>Q14289</id>
    </interactant>
    <interactant intactId="EBI-4281852">
        <id>O75161</id>
        <label>NPHP4</label>
    </interactant>
    <organismsDiffer>false</organismsDiffer>
    <experiments>2</experiments>
</comment>
<comment type="interaction">
    <interactant intactId="EBI-298640">
        <id>Q14289</id>
    </interactant>
    <interactant intactId="EBI-1638043">
        <id>Q7L0Q8</id>
        <label>RHOU</label>
    </interactant>
    <organismsDiffer>false</organismsDiffer>
    <experiments>4</experiments>
</comment>
<comment type="interaction">
    <interactant intactId="EBI-298640">
        <id>Q14289</id>
    </interactant>
    <interactant intactId="EBI-621482">
        <id>P12931</id>
        <label>SRC</label>
    </interactant>
    <organismsDiffer>false</organismsDiffer>
    <experiments>3</experiments>
</comment>
<comment type="interaction">
    <interactant intactId="EBI-298640">
        <id>Q14289</id>
    </interactant>
    <interactant intactId="EBI-518675">
        <id>P40763</id>
        <label>STAT3</label>
    </interactant>
    <organismsDiffer>false</organismsDiffer>
    <experiments>4</experiments>
</comment>
<comment type="interaction">
    <interactant intactId="EBI-298640">
        <id>Q14289</id>
    </interactant>
    <interactant intactId="EBI-356498">
        <id>P62258</id>
        <label>YWHAE</label>
    </interactant>
    <organismsDiffer>false</organismsDiffer>
    <experiments>2</experiments>
</comment>
<comment type="subcellular location">
    <subcellularLocation>
        <location>Cytoplasm</location>
    </subcellularLocation>
    <subcellularLocation>
        <location>Cytoplasm</location>
        <location>Perinuclear region</location>
    </subcellularLocation>
    <subcellularLocation>
        <location>Cell membrane</location>
        <topology>Peripheral membrane protein</topology>
        <orientation>Cytoplasmic side</orientation>
    </subcellularLocation>
    <subcellularLocation>
        <location>Cell junction</location>
        <location>Focal adhesion</location>
    </subcellularLocation>
    <subcellularLocation>
        <location>Cell projection</location>
        <location>Lamellipodium</location>
    </subcellularLocation>
    <subcellularLocation>
        <location>Cytoplasm</location>
        <location>Cell cortex</location>
    </subcellularLocation>
    <subcellularLocation>
        <location>Nucleus</location>
    </subcellularLocation>
    <text>Interaction with NPHP1 induces the membrane-association of the kinase. Colocalizes with integrins at the cell periphery.</text>
</comment>
<comment type="alternative products">
    <event type="alternative splicing"/>
    <isoform>
        <id>Q14289-1</id>
        <name>1</name>
        <sequence type="displayed"/>
    </isoform>
    <isoform>
        <id>Q14289-2</id>
        <name>2</name>
        <name>PYK2H</name>
        <sequence type="described" ref="VSP_004981"/>
    </isoform>
</comment>
<comment type="tissue specificity">
    <text evidence="37 41">Most abundant in the brain, with highest levels in amygdala and hippocampus. Low levels in kidney (at protein level). Also expressed in spleen and lymphocytes.</text>
</comment>
<comment type="PTM">
    <text evidence="10 15 16 21 25 32 33 34 41">Phosphorylated on tyrosine residues in response to various stimuli that elevate the intracellular calcium concentration; this activation is indirect and may be mediated by production of reactive oxygen species (ROS). Tyr-402 is the major autophosphorylation site, but other kinases can also phosphorylate Tyr-402. Autophosphorylation occurs in trans, i.e. one subunit of the dimeric receptor phosphorylates tyrosine residues on the other subunit. Phosphorylation at Tyr-402 promotes interaction with SRC and SRC family members, leading to phosphorylation at Tyr-579; Tyr-580 and Tyr-881. Phosphorylation at Tyr-881 is important for interaction with GRB2. Phosphorylated on tyrosine residues upon activation of FGR and PKC. Recruitment by NPHP1 to cell matrix adhesions initiates Tyr-402 phosphorylation. In monocytes, adherence to substrata is required for tyrosine phosphorylation and kinase activation. Angiotensin II, thapsigargin and L-alpha-lysophosphatidic acid (LPA) also induce autophosphorylation and increase kinase activity. Phosphorylation by MYLK promotes ITGB2 activation and is thus essential to trigger neutrophil transmigration during lung injury. Dephosphorylated by PTPN12.</text>
</comment>
<comment type="disease">
    <text>Aberrant PTK2B/PYK2 expression may play a role in cancer cell proliferation, migration and invasion, in tumor formation and metastasis. Elevated PTK2B/PYK2 expression is seen in gliomas, hepatocellular carcinoma, lung cancer and breast cancer.</text>
</comment>
<comment type="miscellaneous">
    <text>Promotes bone resorption, and thus PTK2B/PYK2 inhibitors might be used to treat osteoporosis.</text>
</comment>
<comment type="similarity">
    <text evidence="5">Belongs to the protein kinase superfamily. Tyr protein kinase family. FAK subfamily.</text>
</comment>
<gene>
    <name type="primary">PTK2B</name>
    <name type="synonym">FAK2</name>
    <name type="synonym">PYK2</name>
    <name type="synonym">RAFTK</name>
</gene>
<dbReference type="EC" id="2.7.10.2"/>
<dbReference type="EMBL" id="U33284">
    <property type="protein sequence ID" value="AAC50203.1"/>
    <property type="molecule type" value="mRNA"/>
</dbReference>
<dbReference type="EMBL" id="L49207">
    <property type="protein sequence ID" value="AAB47217.1"/>
    <property type="molecule type" value="mRNA"/>
</dbReference>
<dbReference type="EMBL" id="D45853">
    <property type="protein sequence ID" value="BAA08289.1"/>
    <property type="molecule type" value="mRNA"/>
</dbReference>
<dbReference type="EMBL" id="U43522">
    <property type="protein sequence ID" value="AAC05330.1"/>
    <property type="molecule type" value="mRNA"/>
</dbReference>
<dbReference type="EMBL" id="S80542">
    <property type="protein sequence ID" value="AAB35701.1"/>
    <property type="molecule type" value="mRNA"/>
</dbReference>
<dbReference type="EMBL" id="AF311103">
    <property type="status" value="NOT_ANNOTATED_CDS"/>
    <property type="molecule type" value="Genomic_DNA"/>
</dbReference>
<dbReference type="EMBL" id="CH471080">
    <property type="protein sequence ID" value="EAW63553.1"/>
    <property type="molecule type" value="Genomic_DNA"/>
</dbReference>
<dbReference type="EMBL" id="CH471080">
    <property type="protein sequence ID" value="EAW63555.1"/>
    <property type="molecule type" value="Genomic_DNA"/>
</dbReference>
<dbReference type="EMBL" id="CH471080">
    <property type="protein sequence ID" value="EAW63556.1"/>
    <property type="molecule type" value="Genomic_DNA"/>
</dbReference>
<dbReference type="EMBL" id="BC036651">
    <property type="protein sequence ID" value="AAH36651.1"/>
    <property type="molecule type" value="mRNA"/>
</dbReference>
<dbReference type="EMBL" id="BC042599">
    <property type="protein sequence ID" value="AAH42599.1"/>
    <property type="molecule type" value="mRNA"/>
</dbReference>
<dbReference type="CCDS" id="CCDS6057.1">
    <molecule id="Q14289-1"/>
</dbReference>
<dbReference type="CCDS" id="CCDS6058.1">
    <molecule id="Q14289-2"/>
</dbReference>
<dbReference type="PIR" id="S60248">
    <property type="entry name" value="S60248"/>
</dbReference>
<dbReference type="RefSeq" id="NP_004094.3">
    <molecule id="Q14289-1"/>
    <property type="nucleotide sequence ID" value="NM_004103.4"/>
</dbReference>
<dbReference type="RefSeq" id="NP_775266.1">
    <molecule id="Q14289-1"/>
    <property type="nucleotide sequence ID" value="NM_173174.3"/>
</dbReference>
<dbReference type="RefSeq" id="NP_775267.1">
    <molecule id="Q14289-2"/>
    <property type="nucleotide sequence ID" value="NM_173175.2"/>
</dbReference>
<dbReference type="RefSeq" id="NP_775268.1">
    <molecule id="Q14289-1"/>
    <property type="nucleotide sequence ID" value="NM_173176.3"/>
</dbReference>
<dbReference type="RefSeq" id="XP_005273504.1">
    <molecule id="Q14289-1"/>
    <property type="nucleotide sequence ID" value="XM_005273447.5"/>
</dbReference>
<dbReference type="RefSeq" id="XP_011542743.1">
    <molecule id="Q14289-1"/>
    <property type="nucleotide sequence ID" value="XM_011544441.3"/>
</dbReference>
<dbReference type="RefSeq" id="XP_016868703.1">
    <molecule id="Q14289-1"/>
    <property type="nucleotide sequence ID" value="XM_017013214.2"/>
</dbReference>
<dbReference type="RefSeq" id="XP_047277487.1">
    <molecule id="Q14289-1"/>
    <property type="nucleotide sequence ID" value="XM_047421531.1"/>
</dbReference>
<dbReference type="RefSeq" id="XP_047277488.1">
    <molecule id="Q14289-1"/>
    <property type="nucleotide sequence ID" value="XM_047421532.1"/>
</dbReference>
<dbReference type="RefSeq" id="XP_047277489.1">
    <molecule id="Q14289-1"/>
    <property type="nucleotide sequence ID" value="XM_047421533.1"/>
</dbReference>
<dbReference type="RefSeq" id="XP_047277490.1">
    <molecule id="Q14289-1"/>
    <property type="nucleotide sequence ID" value="XM_047421534.1"/>
</dbReference>
<dbReference type="RefSeq" id="XP_047277491.1">
    <molecule id="Q14289-1"/>
    <property type="nucleotide sequence ID" value="XM_047421535.1"/>
</dbReference>
<dbReference type="RefSeq" id="XP_047277492.1">
    <molecule id="Q14289-1"/>
    <property type="nucleotide sequence ID" value="XM_047421536.1"/>
</dbReference>
<dbReference type="RefSeq" id="XP_047277493.1">
    <molecule id="Q14289-1"/>
    <property type="nucleotide sequence ID" value="XM_047421537.1"/>
</dbReference>
<dbReference type="RefSeq" id="XP_047277494.1">
    <molecule id="Q14289-1"/>
    <property type="nucleotide sequence ID" value="XM_047421538.1"/>
</dbReference>
<dbReference type="RefSeq" id="XP_047277495.1">
    <molecule id="Q14289-1"/>
    <property type="nucleotide sequence ID" value="XM_047421539.1"/>
</dbReference>
<dbReference type="RefSeq" id="XP_047277496.1">
    <molecule id="Q14289-1"/>
    <property type="nucleotide sequence ID" value="XM_047421540.1"/>
</dbReference>
<dbReference type="RefSeq" id="XP_047277497.1">
    <molecule id="Q14289-1"/>
    <property type="nucleotide sequence ID" value="XM_047421541.1"/>
</dbReference>
<dbReference type="RefSeq" id="XP_047277498.1">
    <molecule id="Q14289-1"/>
    <property type="nucleotide sequence ID" value="XM_047421542.1"/>
</dbReference>
<dbReference type="RefSeq" id="XP_047277499.1">
    <molecule id="Q14289-1"/>
    <property type="nucleotide sequence ID" value="XM_047421543.1"/>
</dbReference>
<dbReference type="RefSeq" id="XP_047277500.1">
    <molecule id="Q14289-1"/>
    <property type="nucleotide sequence ID" value="XM_047421544.1"/>
</dbReference>
<dbReference type="RefSeq" id="XP_047277501.1">
    <molecule id="Q14289-1"/>
    <property type="nucleotide sequence ID" value="XM_047421545.1"/>
</dbReference>
<dbReference type="RefSeq" id="XP_047277502.1">
    <molecule id="Q14289-1"/>
    <property type="nucleotide sequence ID" value="XM_047421546.1"/>
</dbReference>
<dbReference type="RefSeq" id="XP_047277511.1">
    <molecule id="Q14289-2"/>
    <property type="nucleotide sequence ID" value="XM_047421555.1"/>
</dbReference>
<dbReference type="RefSeq" id="XP_047277512.1">
    <molecule id="Q14289-2"/>
    <property type="nucleotide sequence ID" value="XM_047421556.1"/>
</dbReference>
<dbReference type="RefSeq" id="XP_047277513.1">
    <molecule id="Q14289-2"/>
    <property type="nucleotide sequence ID" value="XM_047421557.1"/>
</dbReference>
<dbReference type="RefSeq" id="XP_047277514.1">
    <molecule id="Q14289-2"/>
    <property type="nucleotide sequence ID" value="XM_047421558.1"/>
</dbReference>
<dbReference type="RefSeq" id="XP_047277515.1">
    <molecule id="Q14289-2"/>
    <property type="nucleotide sequence ID" value="XM_047421559.1"/>
</dbReference>
<dbReference type="RefSeq" id="XP_047277516.1">
    <molecule id="Q14289-2"/>
    <property type="nucleotide sequence ID" value="XM_047421560.1"/>
</dbReference>
<dbReference type="RefSeq" id="XP_047277517.1">
    <molecule id="Q14289-2"/>
    <property type="nucleotide sequence ID" value="XM_047421561.1"/>
</dbReference>
<dbReference type="PDB" id="2LK4">
    <property type="method" value="NMR"/>
    <property type="chains" value="A=871-1005"/>
</dbReference>
<dbReference type="PDB" id="3CC6">
    <property type="method" value="X-ray"/>
    <property type="resolution" value="1.60 A"/>
    <property type="chains" value="A=414-692"/>
</dbReference>
<dbReference type="PDB" id="3ET7">
    <property type="method" value="X-ray"/>
    <property type="resolution" value="2.70 A"/>
    <property type="chains" value="A=416-692"/>
</dbReference>
<dbReference type="PDB" id="3FZO">
    <property type="method" value="X-ray"/>
    <property type="resolution" value="2.20 A"/>
    <property type="chains" value="A=416-692"/>
</dbReference>
<dbReference type="PDB" id="3FZP">
    <property type="method" value="X-ray"/>
    <property type="resolution" value="2.10 A"/>
    <property type="chains" value="A=416-692"/>
</dbReference>
<dbReference type="PDB" id="3FZR">
    <property type="method" value="X-ray"/>
    <property type="resolution" value="2.70 A"/>
    <property type="chains" value="A=416-692"/>
</dbReference>
<dbReference type="PDB" id="3FZS">
    <property type="method" value="X-ray"/>
    <property type="resolution" value="1.75 A"/>
    <property type="chains" value="A=416-692"/>
</dbReference>
<dbReference type="PDB" id="3FZT">
    <property type="method" value="X-ray"/>
    <property type="resolution" value="1.95 A"/>
    <property type="chains" value="A=416-692"/>
</dbReference>
<dbReference type="PDB" id="3GM1">
    <property type="method" value="X-ray"/>
    <property type="resolution" value="2.95 A"/>
    <property type="chains" value="A/B=861-1009"/>
</dbReference>
<dbReference type="PDB" id="3GM2">
    <property type="method" value="X-ray"/>
    <property type="resolution" value="2.71 A"/>
    <property type="chains" value="A=861-1009"/>
</dbReference>
<dbReference type="PDB" id="3GM3">
    <property type="method" value="X-ray"/>
    <property type="resolution" value="2.60 A"/>
    <property type="chains" value="A=861-1009"/>
</dbReference>
<dbReference type="PDB" id="3H3C">
    <property type="method" value="X-ray"/>
    <property type="resolution" value="2.00 A"/>
    <property type="chains" value="A=416-692"/>
</dbReference>
<dbReference type="PDB" id="3U3F">
    <property type="method" value="X-ray"/>
    <property type="resolution" value="3.10 A"/>
    <property type="chains" value="A/B/C/D=871-1005"/>
</dbReference>
<dbReference type="PDB" id="4EKU">
    <property type="method" value="X-ray"/>
    <property type="resolution" value="3.25 A"/>
    <property type="chains" value="A=21-409"/>
</dbReference>
<dbReference type="PDB" id="4H1J">
    <property type="method" value="X-ray"/>
    <property type="resolution" value="2.00 A"/>
    <property type="chains" value="A=416-692"/>
</dbReference>
<dbReference type="PDB" id="4H1M">
    <property type="method" value="X-ray"/>
    <property type="resolution" value="1.99 A"/>
    <property type="chains" value="A=416-692"/>
</dbReference>
<dbReference type="PDB" id="4R32">
    <property type="method" value="X-ray"/>
    <property type="resolution" value="3.50 A"/>
    <property type="chains" value="A=871-1005"/>
</dbReference>
<dbReference type="PDB" id="4XEF">
    <property type="method" value="X-ray"/>
    <property type="resolution" value="2.50 A"/>
    <property type="chains" value="A/D=871-1005"/>
</dbReference>
<dbReference type="PDB" id="4XEK">
    <property type="method" value="X-ray"/>
    <property type="resolution" value="1.79 A"/>
    <property type="chains" value="A=871-1005"/>
</dbReference>
<dbReference type="PDB" id="4XEV">
    <property type="method" value="X-ray"/>
    <property type="resolution" value="2.01 A"/>
    <property type="chains" value="A/D=871-1005"/>
</dbReference>
<dbReference type="PDB" id="5TO8">
    <property type="method" value="X-ray"/>
    <property type="resolution" value="1.98 A"/>
    <property type="chains" value="A=414-692"/>
</dbReference>
<dbReference type="PDB" id="5TOB">
    <property type="method" value="X-ray"/>
    <property type="resolution" value="2.12 A"/>
    <property type="chains" value="A=414-692"/>
</dbReference>
<dbReference type="PDB" id="6LF3">
    <property type="method" value="X-ray"/>
    <property type="resolution" value="3.20 A"/>
    <property type="chains" value="A/B/C/D/E/F=790-839"/>
</dbReference>
<dbReference type="PDB" id="7PLL">
    <property type="method" value="NMR"/>
    <property type="chains" value="B=708-726"/>
</dbReference>
<dbReference type="PDB" id="8XOX">
    <property type="method" value="X-ray"/>
    <property type="resolution" value="1.90 A"/>
    <property type="chains" value="A=416-692"/>
</dbReference>
<dbReference type="PDB" id="8YGX">
    <property type="method" value="X-ray"/>
    <property type="resolution" value="2.00 A"/>
    <property type="chains" value="A=416-692"/>
</dbReference>
<dbReference type="PDBsum" id="2LK4"/>
<dbReference type="PDBsum" id="3CC6"/>
<dbReference type="PDBsum" id="3ET7"/>
<dbReference type="PDBsum" id="3FZO"/>
<dbReference type="PDBsum" id="3FZP"/>
<dbReference type="PDBsum" id="3FZR"/>
<dbReference type="PDBsum" id="3FZS"/>
<dbReference type="PDBsum" id="3FZT"/>
<dbReference type="PDBsum" id="3GM1"/>
<dbReference type="PDBsum" id="3GM2"/>
<dbReference type="PDBsum" id="3GM3"/>
<dbReference type="PDBsum" id="3H3C"/>
<dbReference type="PDBsum" id="3U3F"/>
<dbReference type="PDBsum" id="4EKU"/>
<dbReference type="PDBsum" id="4H1J"/>
<dbReference type="PDBsum" id="4H1M"/>
<dbReference type="PDBsum" id="4R32"/>
<dbReference type="PDBsum" id="4XEF"/>
<dbReference type="PDBsum" id="4XEK"/>
<dbReference type="PDBsum" id="4XEV"/>
<dbReference type="PDBsum" id="5TO8"/>
<dbReference type="PDBsum" id="5TOB"/>
<dbReference type="PDBsum" id="6LF3"/>
<dbReference type="PDBsum" id="7PLL"/>
<dbReference type="PDBsum" id="8XOX"/>
<dbReference type="PDBsum" id="8YGX"/>
<dbReference type="BMRB" id="Q14289"/>
<dbReference type="SMR" id="Q14289"/>
<dbReference type="BioGRID" id="108480">
    <property type="interactions" value="79"/>
</dbReference>
<dbReference type="CORUM" id="Q14289"/>
<dbReference type="ELM" id="Q14289"/>
<dbReference type="FunCoup" id="Q14289">
    <property type="interactions" value="1015"/>
</dbReference>
<dbReference type="IntAct" id="Q14289">
    <property type="interactions" value="50"/>
</dbReference>
<dbReference type="MINT" id="Q14289"/>
<dbReference type="STRING" id="9606.ENSP00000380638"/>
<dbReference type="BindingDB" id="Q14289"/>
<dbReference type="ChEMBL" id="CHEMBL5469"/>
<dbReference type="DrugBank" id="DB08341">
    <property type="generic name" value="4-{[4-{[(1R,2R)-2-(dimethylamino)cyclopentyl]amino}-5-(trifluoromethyl)pyrimidin-2-yl]amino}-N-methylbenzenesulfonamide"/>
</dbReference>
<dbReference type="DrugBank" id="DB12010">
    <property type="generic name" value="Fostamatinib"/>
</dbReference>
<dbReference type="DrugBank" id="DB01645">
    <property type="generic name" value="Genistein"/>
</dbReference>
<dbReference type="DrugBank" id="DB01097">
    <property type="generic name" value="Leflunomide"/>
</dbReference>
<dbReference type="DrugCentral" id="Q14289"/>
<dbReference type="GuidetoPHARMACOLOGY" id="2181"/>
<dbReference type="GlyGen" id="Q14289">
    <property type="glycosylation" value="2 sites, 1 O-linked glycan (1 site)"/>
</dbReference>
<dbReference type="iPTMnet" id="Q14289"/>
<dbReference type="PhosphoSitePlus" id="Q14289"/>
<dbReference type="SwissPalm" id="Q14289"/>
<dbReference type="BioMuta" id="PTK2B"/>
<dbReference type="DMDM" id="3183003"/>
<dbReference type="CPTAC" id="CPTAC-1791"/>
<dbReference type="CPTAC" id="CPTAC-2886"/>
<dbReference type="CPTAC" id="CPTAC-2887"/>
<dbReference type="jPOST" id="Q14289"/>
<dbReference type="MassIVE" id="Q14289"/>
<dbReference type="PaxDb" id="9606-ENSP00000380638"/>
<dbReference type="PeptideAtlas" id="Q14289"/>
<dbReference type="ProteomicsDB" id="59955">
    <molecule id="Q14289-1"/>
</dbReference>
<dbReference type="ProteomicsDB" id="59956">
    <molecule id="Q14289-2"/>
</dbReference>
<dbReference type="Pumba" id="Q14289"/>
<dbReference type="TopDownProteomics" id="Q14289-2">
    <molecule id="Q14289-2"/>
</dbReference>
<dbReference type="Antibodypedia" id="3551">
    <property type="antibodies" value="1063 antibodies from 45 providers"/>
</dbReference>
<dbReference type="DNASU" id="2185"/>
<dbReference type="Ensembl" id="ENST00000346049.10">
    <molecule id="Q14289-1"/>
    <property type="protein sequence ID" value="ENSP00000332816.6"/>
    <property type="gene ID" value="ENSG00000120899.18"/>
</dbReference>
<dbReference type="Ensembl" id="ENST00000397501.5">
    <molecule id="Q14289-1"/>
    <property type="protein sequence ID" value="ENSP00000380638.1"/>
    <property type="gene ID" value="ENSG00000120899.18"/>
</dbReference>
<dbReference type="Ensembl" id="ENST00000420218.3">
    <molecule id="Q14289-2"/>
    <property type="protein sequence ID" value="ENSP00000391995.2"/>
    <property type="gene ID" value="ENSG00000120899.18"/>
</dbReference>
<dbReference type="Ensembl" id="ENST00000517339.5">
    <molecule id="Q14289-2"/>
    <property type="protein sequence ID" value="ENSP00000427931.1"/>
    <property type="gene ID" value="ENSG00000120899.18"/>
</dbReference>
<dbReference type="GeneID" id="2185"/>
<dbReference type="KEGG" id="hsa:2185"/>
<dbReference type="MANE-Select" id="ENST00000346049.10">
    <property type="protein sequence ID" value="ENSP00000332816.6"/>
    <property type="RefSeq nucleotide sequence ID" value="NM_173176.3"/>
    <property type="RefSeq protein sequence ID" value="NP_775268.1"/>
</dbReference>
<dbReference type="UCSC" id="uc003xfn.3">
    <molecule id="Q14289-1"/>
    <property type="organism name" value="human"/>
</dbReference>
<dbReference type="AGR" id="HGNC:9612"/>
<dbReference type="CTD" id="2185"/>
<dbReference type="DisGeNET" id="2185"/>
<dbReference type="GeneCards" id="PTK2B"/>
<dbReference type="HGNC" id="HGNC:9612">
    <property type="gene designation" value="PTK2B"/>
</dbReference>
<dbReference type="HPA" id="ENSG00000120899">
    <property type="expression patterns" value="Tissue enhanced (bone marrow, brain)"/>
</dbReference>
<dbReference type="MalaCards" id="PTK2B"/>
<dbReference type="MIM" id="601212">
    <property type="type" value="gene"/>
</dbReference>
<dbReference type="neXtProt" id="NX_Q14289"/>
<dbReference type="NIAGADS" id="ENSG00000120899"/>
<dbReference type="OpenTargets" id="ENSG00000120899"/>
<dbReference type="PharmGKB" id="PA33956"/>
<dbReference type="VEuPathDB" id="HostDB:ENSG00000120899"/>
<dbReference type="eggNOG" id="KOG4257">
    <property type="taxonomic scope" value="Eukaryota"/>
</dbReference>
<dbReference type="GeneTree" id="ENSGT00940000157269"/>
<dbReference type="HOGENOM" id="CLU_002646_0_1_1"/>
<dbReference type="InParanoid" id="Q14289"/>
<dbReference type="OMA" id="EIMSYGQ"/>
<dbReference type="OrthoDB" id="9976756at2759"/>
<dbReference type="PAN-GO" id="Q14289">
    <property type="GO annotations" value="9 GO annotations based on evolutionary models"/>
</dbReference>
<dbReference type="PhylomeDB" id="Q14289"/>
<dbReference type="TreeFam" id="TF316643"/>
<dbReference type="BRENDA" id="2.7.10.2">
    <property type="organism ID" value="2681"/>
</dbReference>
<dbReference type="PathwayCommons" id="Q14289"/>
<dbReference type="Reactome" id="R-HSA-391160">
    <property type="pathway name" value="Signal regulatory protein family interactions"/>
</dbReference>
<dbReference type="Reactome" id="R-HSA-4420097">
    <property type="pathway name" value="VEGFA-VEGFR2 Pathway"/>
</dbReference>
<dbReference type="Reactome" id="R-HSA-9013420">
    <property type="pathway name" value="RHOU GTPase cycle"/>
</dbReference>
<dbReference type="Reactome" id="R-HSA-9020558">
    <property type="pathway name" value="Interleukin-2 signaling"/>
</dbReference>
<dbReference type="SignaLink" id="Q14289"/>
<dbReference type="SIGNOR" id="Q14289"/>
<dbReference type="BioGRID-ORCS" id="2185">
    <property type="hits" value="20 hits in 1194 CRISPR screens"/>
</dbReference>
<dbReference type="CD-CODE" id="8C2F96ED">
    <property type="entry name" value="Centrosome"/>
</dbReference>
<dbReference type="CD-CODE" id="FB4E32DD">
    <property type="entry name" value="Presynaptic clusters and postsynaptic densities"/>
</dbReference>
<dbReference type="ChiTaRS" id="PTK2B">
    <property type="organism name" value="human"/>
</dbReference>
<dbReference type="EvolutionaryTrace" id="Q14289"/>
<dbReference type="GeneWiki" id="PTK2B"/>
<dbReference type="GenomeRNAi" id="2185"/>
<dbReference type="Pharos" id="Q14289">
    <property type="development level" value="Tclin"/>
</dbReference>
<dbReference type="PRO" id="PR:Q14289"/>
<dbReference type="Proteomes" id="UP000005640">
    <property type="component" value="Chromosome 8"/>
</dbReference>
<dbReference type="RNAct" id="Q14289">
    <property type="molecule type" value="protein"/>
</dbReference>
<dbReference type="Bgee" id="ENSG00000120899">
    <property type="expression patterns" value="Expressed in right hemisphere of cerebellum and 165 other cell types or tissues"/>
</dbReference>
<dbReference type="ExpressionAtlas" id="Q14289">
    <property type="expression patterns" value="baseline and differential"/>
</dbReference>
<dbReference type="GO" id="GO:0097440">
    <property type="term" value="C:apical dendrite"/>
    <property type="evidence" value="ECO:0000250"/>
    <property type="project" value="Alzheimers_University_of_Toronto"/>
</dbReference>
<dbReference type="GO" id="GO:0044297">
    <property type="term" value="C:cell body"/>
    <property type="evidence" value="ECO:0000250"/>
    <property type="project" value="Alzheimers_University_of_Toronto"/>
</dbReference>
<dbReference type="GO" id="GO:0005938">
    <property type="term" value="C:cell cortex"/>
    <property type="evidence" value="ECO:0007669"/>
    <property type="project" value="UniProtKB-SubCell"/>
</dbReference>
<dbReference type="GO" id="GO:0005737">
    <property type="term" value="C:cytoplasm"/>
    <property type="evidence" value="ECO:0000304"/>
    <property type="project" value="ProtInc"/>
</dbReference>
<dbReference type="GO" id="GO:0005856">
    <property type="term" value="C:cytoskeleton"/>
    <property type="evidence" value="ECO:0007669"/>
    <property type="project" value="InterPro"/>
</dbReference>
<dbReference type="GO" id="GO:0005829">
    <property type="term" value="C:cytosol"/>
    <property type="evidence" value="ECO:0000304"/>
    <property type="project" value="Reactome"/>
</dbReference>
<dbReference type="GO" id="GO:0030425">
    <property type="term" value="C:dendrite"/>
    <property type="evidence" value="ECO:0000250"/>
    <property type="project" value="Alzheimers_University_of_Toronto"/>
</dbReference>
<dbReference type="GO" id="GO:0005925">
    <property type="term" value="C:focal adhesion"/>
    <property type="evidence" value="ECO:0000314"/>
    <property type="project" value="UniProtKB"/>
</dbReference>
<dbReference type="GO" id="GO:0098978">
    <property type="term" value="C:glutamatergic synapse"/>
    <property type="evidence" value="ECO:0007669"/>
    <property type="project" value="Ensembl"/>
</dbReference>
<dbReference type="GO" id="GO:0030426">
    <property type="term" value="C:growth cone"/>
    <property type="evidence" value="ECO:0000250"/>
    <property type="project" value="Alzheimers_University_of_Toronto"/>
</dbReference>
<dbReference type="GO" id="GO:0030027">
    <property type="term" value="C:lamellipodium"/>
    <property type="evidence" value="ECO:0000314"/>
    <property type="project" value="UniProtKB"/>
</dbReference>
<dbReference type="GO" id="GO:0043025">
    <property type="term" value="C:neuronal cell body"/>
    <property type="evidence" value="ECO:0000250"/>
    <property type="project" value="Alzheimers_University_of_Toronto"/>
</dbReference>
<dbReference type="GO" id="GO:0017146">
    <property type="term" value="C:NMDA selective glutamate receptor complex"/>
    <property type="evidence" value="ECO:0000250"/>
    <property type="project" value="Alzheimers_University_of_Toronto"/>
</dbReference>
<dbReference type="GO" id="GO:0005634">
    <property type="term" value="C:nucleus"/>
    <property type="evidence" value="ECO:0000314"/>
    <property type="project" value="UniProtKB"/>
</dbReference>
<dbReference type="GO" id="GO:0048471">
    <property type="term" value="C:perinuclear region of cytoplasm"/>
    <property type="evidence" value="ECO:0000314"/>
    <property type="project" value="UniProtKB"/>
</dbReference>
<dbReference type="GO" id="GO:0005886">
    <property type="term" value="C:plasma membrane"/>
    <property type="evidence" value="ECO:0000318"/>
    <property type="project" value="GO_Central"/>
</dbReference>
<dbReference type="GO" id="GO:0014069">
    <property type="term" value="C:postsynaptic density"/>
    <property type="evidence" value="ECO:0000250"/>
    <property type="project" value="Alzheimers_University_of_Toronto"/>
</dbReference>
<dbReference type="GO" id="GO:0099092">
    <property type="term" value="C:postsynaptic density, intracellular component"/>
    <property type="evidence" value="ECO:0007669"/>
    <property type="project" value="Ensembl"/>
</dbReference>
<dbReference type="GO" id="GO:0098793">
    <property type="term" value="C:presynapse"/>
    <property type="evidence" value="ECO:0007669"/>
    <property type="project" value="Ensembl"/>
</dbReference>
<dbReference type="GO" id="GO:0005524">
    <property type="term" value="F:ATP binding"/>
    <property type="evidence" value="ECO:0007669"/>
    <property type="project" value="UniProtKB-KW"/>
</dbReference>
<dbReference type="GO" id="GO:0004683">
    <property type="term" value="F:calcium/calmodulin-dependent protein kinase activity"/>
    <property type="evidence" value="ECO:0000250"/>
    <property type="project" value="Alzheimers_University_of_Toronto"/>
</dbReference>
<dbReference type="GO" id="GO:0035255">
    <property type="term" value="F:ionotropic glutamate receptor binding"/>
    <property type="evidence" value="ECO:0000250"/>
    <property type="project" value="Alzheimers_University_of_Toronto"/>
</dbReference>
<dbReference type="GO" id="GO:0099602">
    <property type="term" value="F:neurotransmitter receptor regulator activity"/>
    <property type="evidence" value="ECO:0000250"/>
    <property type="project" value="Alzheimers_University_of_Toronto"/>
</dbReference>
<dbReference type="GO" id="GO:0004715">
    <property type="term" value="F:non-membrane spanning protein tyrosine kinase activity"/>
    <property type="evidence" value="ECO:0000314"/>
    <property type="project" value="UniProtKB"/>
</dbReference>
<dbReference type="GO" id="GO:0004713">
    <property type="term" value="F:protein tyrosine kinase activity"/>
    <property type="evidence" value="ECO:0000304"/>
    <property type="project" value="ProtInc"/>
</dbReference>
<dbReference type="GO" id="GO:0030546">
    <property type="term" value="F:signaling receptor activator activity"/>
    <property type="evidence" value="ECO:0000250"/>
    <property type="project" value="Alzheimers_University_of_Toronto"/>
</dbReference>
<dbReference type="GO" id="GO:0042976">
    <property type="term" value="P:activation of Janus kinase activity"/>
    <property type="evidence" value="ECO:0000315"/>
    <property type="project" value="UniProtKB"/>
</dbReference>
<dbReference type="GO" id="GO:0002250">
    <property type="term" value="P:adaptive immune response"/>
    <property type="evidence" value="ECO:0007669"/>
    <property type="project" value="UniProtKB-KW"/>
</dbReference>
<dbReference type="GO" id="GO:0006915">
    <property type="term" value="P:apoptotic process"/>
    <property type="evidence" value="ECO:0000304"/>
    <property type="project" value="ProtInc"/>
</dbReference>
<dbReference type="GO" id="GO:0045453">
    <property type="term" value="P:bone resorption"/>
    <property type="evidence" value="ECO:0000250"/>
    <property type="project" value="UniProtKB"/>
</dbReference>
<dbReference type="GO" id="GO:0007166">
    <property type="term" value="P:cell surface receptor signaling pathway"/>
    <property type="evidence" value="ECO:0000315"/>
    <property type="project" value="UniProtKB"/>
</dbReference>
<dbReference type="GO" id="GO:0006968">
    <property type="term" value="P:cellular defense response"/>
    <property type="evidence" value="ECO:0000250"/>
    <property type="project" value="Alzheimers_University_of_Toronto"/>
</dbReference>
<dbReference type="GO" id="GO:0071498">
    <property type="term" value="P:cellular response to fluid shear stress"/>
    <property type="evidence" value="ECO:0007669"/>
    <property type="project" value="Ensembl"/>
</dbReference>
<dbReference type="GO" id="GO:0071300">
    <property type="term" value="P:cellular response to retinoic acid"/>
    <property type="evidence" value="ECO:0000315"/>
    <property type="project" value="BHF-UCL"/>
</dbReference>
<dbReference type="GO" id="GO:0070098">
    <property type="term" value="P:chemokine-mediated signaling pathway"/>
    <property type="evidence" value="ECO:0000250"/>
    <property type="project" value="UniProtKB"/>
</dbReference>
<dbReference type="GO" id="GO:0030865">
    <property type="term" value="P:cortical cytoskeleton organization"/>
    <property type="evidence" value="ECO:0000250"/>
    <property type="project" value="UniProtKB"/>
</dbReference>
<dbReference type="GO" id="GO:0086100">
    <property type="term" value="P:endothelin receptor signaling pathway"/>
    <property type="evidence" value="ECO:0000315"/>
    <property type="project" value="UniProtKB"/>
</dbReference>
<dbReference type="GO" id="GO:0007173">
    <property type="term" value="P:epidermal growth factor receptor signaling pathway"/>
    <property type="evidence" value="ECO:0000318"/>
    <property type="project" value="GO_Central"/>
</dbReference>
<dbReference type="GO" id="GO:0007030">
    <property type="term" value="P:Golgi organization"/>
    <property type="evidence" value="ECO:0007669"/>
    <property type="project" value="Ensembl"/>
</dbReference>
<dbReference type="GO" id="GO:0007229">
    <property type="term" value="P:integrin-mediated signaling pathway"/>
    <property type="evidence" value="ECO:0000315"/>
    <property type="project" value="UniProtKB"/>
</dbReference>
<dbReference type="GO" id="GO:0035235">
    <property type="term" value="P:ionotropic glutamate receptor signaling pathway"/>
    <property type="evidence" value="ECO:0000250"/>
    <property type="project" value="Alzheimers_University_of_Toronto"/>
</dbReference>
<dbReference type="GO" id="GO:0060291">
    <property type="term" value="P:long-term synaptic potentiation"/>
    <property type="evidence" value="ECO:0000250"/>
    <property type="project" value="Alzheimers_University_of_Toronto"/>
</dbReference>
<dbReference type="GO" id="GO:0002315">
    <property type="term" value="P:marginal zone B cell differentiation"/>
    <property type="evidence" value="ECO:0000250"/>
    <property type="project" value="UniProtKB"/>
</dbReference>
<dbReference type="GO" id="GO:0043066">
    <property type="term" value="P:negative regulation of apoptotic process"/>
    <property type="evidence" value="ECO:0000315"/>
    <property type="project" value="UniProtKB"/>
</dbReference>
<dbReference type="GO" id="GO:0030502">
    <property type="term" value="P:negative regulation of bone mineralization"/>
    <property type="evidence" value="ECO:0000250"/>
    <property type="project" value="UniProtKB"/>
</dbReference>
<dbReference type="GO" id="GO:0008285">
    <property type="term" value="P:negative regulation of cell population proliferation"/>
    <property type="evidence" value="ECO:0000315"/>
    <property type="project" value="UniProtKB"/>
</dbReference>
<dbReference type="GO" id="GO:0045638">
    <property type="term" value="P:negative regulation of myeloid cell differentiation"/>
    <property type="evidence" value="ECO:0000315"/>
    <property type="project" value="UniProtKB"/>
</dbReference>
<dbReference type="GO" id="GO:0043524">
    <property type="term" value="P:negative regulation of neuron apoptotic process"/>
    <property type="evidence" value="ECO:0000250"/>
    <property type="project" value="Alzheimers_University_of_Toronto"/>
</dbReference>
<dbReference type="GO" id="GO:0043267">
    <property type="term" value="P:negative regulation of potassium ion transport"/>
    <property type="evidence" value="ECO:0000314"/>
    <property type="project" value="UniProtKB"/>
</dbReference>
<dbReference type="GO" id="GO:0001764">
    <property type="term" value="P:neuron migration"/>
    <property type="evidence" value="ECO:0007669"/>
    <property type="project" value="Ensembl"/>
</dbReference>
<dbReference type="GO" id="GO:0038083">
    <property type="term" value="P:peptidyl-tyrosine autophosphorylation"/>
    <property type="evidence" value="ECO:0000314"/>
    <property type="project" value="CACAO"/>
</dbReference>
<dbReference type="GO" id="GO:0018108">
    <property type="term" value="P:peptidyl-tyrosine phosphorylation"/>
    <property type="evidence" value="ECO:0000314"/>
    <property type="project" value="UniProtKB"/>
</dbReference>
<dbReference type="GO" id="GO:0030838">
    <property type="term" value="P:positive regulation of actin filament polymerization"/>
    <property type="evidence" value="ECO:0000315"/>
    <property type="project" value="UniProtKB"/>
</dbReference>
<dbReference type="GO" id="GO:0045766">
    <property type="term" value="P:positive regulation of angiogenesis"/>
    <property type="evidence" value="ECO:0007669"/>
    <property type="project" value="Ensembl"/>
</dbReference>
<dbReference type="GO" id="GO:2000538">
    <property type="term" value="P:positive regulation of B cell chemotaxis"/>
    <property type="evidence" value="ECO:0000250"/>
    <property type="project" value="UniProtKB"/>
</dbReference>
<dbReference type="GO" id="GO:0030335">
    <property type="term" value="P:positive regulation of cell migration"/>
    <property type="evidence" value="ECO:0000315"/>
    <property type="project" value="UniProtKB"/>
</dbReference>
<dbReference type="GO" id="GO:0008284">
    <property type="term" value="P:positive regulation of cell population proliferation"/>
    <property type="evidence" value="ECO:0000315"/>
    <property type="project" value="UniProtKB"/>
</dbReference>
<dbReference type="GO" id="GO:0001954">
    <property type="term" value="P:positive regulation of cell-matrix adhesion"/>
    <property type="evidence" value="ECO:0000315"/>
    <property type="project" value="UniProtKB"/>
</dbReference>
<dbReference type="GO" id="GO:0010595">
    <property type="term" value="P:positive regulation of endothelial cell migration"/>
    <property type="evidence" value="ECO:0000314"/>
    <property type="project" value="BHF-UCL"/>
</dbReference>
<dbReference type="GO" id="GO:0070374">
    <property type="term" value="P:positive regulation of ERK1 and ERK2 cascade"/>
    <property type="evidence" value="ECO:0000315"/>
    <property type="project" value="UniProtKB"/>
</dbReference>
<dbReference type="GO" id="GO:2000463">
    <property type="term" value="P:positive regulation of excitatory postsynaptic potential"/>
    <property type="evidence" value="ECO:0000250"/>
    <property type="project" value="Alzheimers_University_of_Toronto"/>
</dbReference>
<dbReference type="GO" id="GO:0046330">
    <property type="term" value="P:positive regulation of JNK cascade"/>
    <property type="evidence" value="ECO:0000315"/>
    <property type="project" value="UniProtKB"/>
</dbReference>
<dbReference type="GO" id="GO:0010976">
    <property type="term" value="P:positive regulation of neuron projection development"/>
    <property type="evidence" value="ECO:0000315"/>
    <property type="project" value="BHF-UCL"/>
</dbReference>
<dbReference type="GO" id="GO:0051897">
    <property type="term" value="P:positive regulation of phosphatidylinositol 3-kinase/protein kinase B signal transduction"/>
    <property type="evidence" value="ECO:0000250"/>
    <property type="project" value="UniProtKB"/>
</dbReference>
<dbReference type="GO" id="GO:0045860">
    <property type="term" value="P:positive regulation of protein kinase activity"/>
    <property type="evidence" value="ECO:0000315"/>
    <property type="project" value="UniProtKB"/>
</dbReference>
<dbReference type="GO" id="GO:0051968">
    <property type="term" value="P:positive regulation of synaptic transmission, glutamatergic"/>
    <property type="evidence" value="ECO:0000250"/>
    <property type="project" value="Alzheimers_University_of_Toronto"/>
</dbReference>
<dbReference type="GO" id="GO:2000060">
    <property type="term" value="P:positive regulation of ubiquitin-dependent protein catabolic process"/>
    <property type="evidence" value="ECO:0007669"/>
    <property type="project" value="Ensembl"/>
</dbReference>
<dbReference type="GO" id="GO:0046777">
    <property type="term" value="P:protein autophosphorylation"/>
    <property type="evidence" value="ECO:0000304"/>
    <property type="project" value="UniProtKB"/>
</dbReference>
<dbReference type="GO" id="GO:0006468">
    <property type="term" value="P:protein phosphorylation"/>
    <property type="evidence" value="ECO:0000304"/>
    <property type="project" value="ProtInc"/>
</dbReference>
<dbReference type="GO" id="GO:0065003">
    <property type="term" value="P:protein-containing complex assembly"/>
    <property type="evidence" value="ECO:0000304"/>
    <property type="project" value="ProtInc"/>
</dbReference>
<dbReference type="GO" id="GO:0032956">
    <property type="term" value="P:regulation of actin cytoskeleton organization"/>
    <property type="evidence" value="ECO:0000250"/>
    <property type="project" value="UniProtKB"/>
</dbReference>
<dbReference type="GO" id="GO:0030155">
    <property type="term" value="P:regulation of cell adhesion"/>
    <property type="evidence" value="ECO:0000315"/>
    <property type="project" value="UniProtKB"/>
</dbReference>
<dbReference type="GO" id="GO:0008360">
    <property type="term" value="P:regulation of cell shape"/>
    <property type="evidence" value="ECO:0000315"/>
    <property type="project" value="UniProtKB"/>
</dbReference>
<dbReference type="GO" id="GO:0010758">
    <property type="term" value="P:regulation of macrophage chemotaxis"/>
    <property type="evidence" value="ECO:0000250"/>
    <property type="project" value="UniProtKB"/>
</dbReference>
<dbReference type="GO" id="GO:0099151">
    <property type="term" value="P:regulation of postsynaptic density assembly"/>
    <property type="evidence" value="ECO:0007669"/>
    <property type="project" value="Ensembl"/>
</dbReference>
<dbReference type="GO" id="GO:0051279">
    <property type="term" value="P:regulation of release of sequestered calcium ion into cytosol"/>
    <property type="evidence" value="ECO:0000250"/>
    <property type="project" value="UniProtKB"/>
</dbReference>
<dbReference type="GO" id="GO:0048167">
    <property type="term" value="P:regulation of synaptic plasticity"/>
    <property type="evidence" value="ECO:0000304"/>
    <property type="project" value="ARUK-UCL"/>
</dbReference>
<dbReference type="GO" id="GO:2000058">
    <property type="term" value="P:regulation of ubiquitin-dependent protein catabolic process"/>
    <property type="evidence" value="ECO:0000314"/>
    <property type="project" value="UniProtKB"/>
</dbReference>
<dbReference type="GO" id="GO:0007172">
    <property type="term" value="P:signal complex assembly"/>
    <property type="evidence" value="ECO:0000304"/>
    <property type="project" value="ProtInc"/>
</dbReference>
<dbReference type="GO" id="GO:0007165">
    <property type="term" value="P:signal transduction"/>
    <property type="evidence" value="ECO:0000304"/>
    <property type="project" value="ProtInc"/>
</dbReference>
<dbReference type="GO" id="GO:0002040">
    <property type="term" value="P:sprouting angiogenesis"/>
    <property type="evidence" value="ECO:0000250"/>
    <property type="project" value="UniProtKB"/>
</dbReference>
<dbReference type="GO" id="GO:0033209">
    <property type="term" value="P:tumor necrosis factor-mediated signaling pathway"/>
    <property type="evidence" value="ECO:0000315"/>
    <property type="project" value="UniProtKB"/>
</dbReference>
<dbReference type="GO" id="GO:0048010">
    <property type="term" value="P:vascular endothelial growth factor receptor signaling pathway"/>
    <property type="evidence" value="ECO:0000315"/>
    <property type="project" value="BHF-UCL"/>
</dbReference>
<dbReference type="CDD" id="cd14473">
    <property type="entry name" value="FERM_B-lobe"/>
    <property type="match status" value="1"/>
</dbReference>
<dbReference type="CDD" id="cd13190">
    <property type="entry name" value="FERM_C_FAK1"/>
    <property type="match status" value="1"/>
</dbReference>
<dbReference type="CDD" id="cd05056">
    <property type="entry name" value="PTKc_FAK"/>
    <property type="match status" value="1"/>
</dbReference>
<dbReference type="FunFam" id="1.20.80.10:FF:000004">
    <property type="entry name" value="Protein-tyrosine kinase 2-beta isoform 1"/>
    <property type="match status" value="1"/>
</dbReference>
<dbReference type="FunFam" id="1.20.120.330:FF:000007">
    <property type="entry name" value="protein-tyrosine kinase 2-beta isoform X1"/>
    <property type="match status" value="1"/>
</dbReference>
<dbReference type="FunFam" id="2.30.29.30:FF:000142">
    <property type="entry name" value="protein-tyrosine kinase 2-beta isoform X1"/>
    <property type="match status" value="1"/>
</dbReference>
<dbReference type="FunFam" id="3.10.20.90:FF:000080">
    <property type="entry name" value="protein-tyrosine kinase 2-beta isoform X1"/>
    <property type="match status" value="1"/>
</dbReference>
<dbReference type="FunFam" id="3.30.200.20:FF:000194">
    <property type="entry name" value="protein-tyrosine kinase 2-beta isoform X1"/>
    <property type="match status" value="1"/>
</dbReference>
<dbReference type="FunFam" id="1.10.510.10:FF:000230">
    <property type="entry name" value="protein-tyrosine kinase 2-beta isoform X2"/>
    <property type="match status" value="1"/>
</dbReference>
<dbReference type="Gene3D" id="1.20.80.10">
    <property type="match status" value="1"/>
</dbReference>
<dbReference type="Gene3D" id="1.20.120.330">
    <property type="entry name" value="Nucleotidyltransferases domain 2"/>
    <property type="match status" value="1"/>
</dbReference>
<dbReference type="Gene3D" id="3.10.20.90">
    <property type="entry name" value="Phosphatidylinositol 3-kinase Catalytic Subunit, Chain A, domain 1"/>
    <property type="match status" value="1"/>
</dbReference>
<dbReference type="Gene3D" id="3.30.200.20">
    <property type="entry name" value="Phosphorylase Kinase, domain 1"/>
    <property type="match status" value="1"/>
</dbReference>
<dbReference type="Gene3D" id="2.30.29.30">
    <property type="entry name" value="Pleckstrin-homology domain (PH domain)/Phosphotyrosine-binding domain (PTB)"/>
    <property type="match status" value="1"/>
</dbReference>
<dbReference type="Gene3D" id="1.10.510.10">
    <property type="entry name" value="Transferase(Phosphotransferase) domain 1"/>
    <property type="match status" value="1"/>
</dbReference>
<dbReference type="InterPro" id="IPR019749">
    <property type="entry name" value="Band_41_domain"/>
</dbReference>
<dbReference type="InterPro" id="IPR041390">
    <property type="entry name" value="FADK_N"/>
</dbReference>
<dbReference type="InterPro" id="IPR049385">
    <property type="entry name" value="FAK1-like_FERM_C"/>
</dbReference>
<dbReference type="InterPro" id="IPR041784">
    <property type="entry name" value="FAK1/PYK2_FERM_C"/>
</dbReference>
<dbReference type="InterPro" id="IPR014352">
    <property type="entry name" value="FERM/acyl-CoA-bd_prot_sf"/>
</dbReference>
<dbReference type="InterPro" id="IPR035963">
    <property type="entry name" value="FERM_2"/>
</dbReference>
<dbReference type="InterPro" id="IPR019748">
    <property type="entry name" value="FERM_central"/>
</dbReference>
<dbReference type="InterPro" id="IPR000299">
    <property type="entry name" value="FERM_domain"/>
</dbReference>
<dbReference type="InterPro" id="IPR036137">
    <property type="entry name" value="Focal_adhe_kin_target_dom_sf"/>
</dbReference>
<dbReference type="InterPro" id="IPR005189">
    <property type="entry name" value="Focal_adhesion_kin_target_dom"/>
</dbReference>
<dbReference type="InterPro" id="IPR011009">
    <property type="entry name" value="Kinase-like_dom_sf"/>
</dbReference>
<dbReference type="InterPro" id="IPR011993">
    <property type="entry name" value="PH-like_dom_sf"/>
</dbReference>
<dbReference type="InterPro" id="IPR000719">
    <property type="entry name" value="Prot_kinase_dom"/>
</dbReference>
<dbReference type="InterPro" id="IPR017441">
    <property type="entry name" value="Protein_kinase_ATP_BS"/>
</dbReference>
<dbReference type="InterPro" id="IPR001245">
    <property type="entry name" value="Ser-Thr/Tyr_kinase_cat_dom"/>
</dbReference>
<dbReference type="InterPro" id="IPR008266">
    <property type="entry name" value="Tyr_kinase_AS"/>
</dbReference>
<dbReference type="InterPro" id="IPR020635">
    <property type="entry name" value="Tyr_kinase_cat_dom"/>
</dbReference>
<dbReference type="InterPro" id="IPR029071">
    <property type="entry name" value="Ubiquitin-like_domsf"/>
</dbReference>
<dbReference type="PANTHER" id="PTHR46221">
    <property type="entry name" value="FERM AND PDZ DOMAIN-CONTAINING PROTEIN FAMILY MEMBER"/>
    <property type="match status" value="1"/>
</dbReference>
<dbReference type="PANTHER" id="PTHR46221:SF11">
    <property type="entry name" value="NON-SPECIFIC PROTEIN-TYROSINE KINASE"/>
    <property type="match status" value="1"/>
</dbReference>
<dbReference type="Pfam" id="PF21477">
    <property type="entry name" value="FERM_C_FAK1"/>
    <property type="match status" value="1"/>
</dbReference>
<dbReference type="Pfam" id="PF00373">
    <property type="entry name" value="FERM_M"/>
    <property type="match status" value="1"/>
</dbReference>
<dbReference type="Pfam" id="PF18038">
    <property type="entry name" value="FERM_N_2"/>
    <property type="match status" value="1"/>
</dbReference>
<dbReference type="Pfam" id="PF03623">
    <property type="entry name" value="Focal_AT"/>
    <property type="match status" value="1"/>
</dbReference>
<dbReference type="Pfam" id="PF07714">
    <property type="entry name" value="PK_Tyr_Ser-Thr"/>
    <property type="match status" value="1"/>
</dbReference>
<dbReference type="PRINTS" id="PR00109">
    <property type="entry name" value="TYRKINASE"/>
</dbReference>
<dbReference type="SMART" id="SM00295">
    <property type="entry name" value="B41"/>
    <property type="match status" value="1"/>
</dbReference>
<dbReference type="SMART" id="SM00219">
    <property type="entry name" value="TyrKc"/>
    <property type="match status" value="1"/>
</dbReference>
<dbReference type="SUPFAM" id="SSF68993">
    <property type="entry name" value="FAT domain of focal adhesion kinase"/>
    <property type="match status" value="1"/>
</dbReference>
<dbReference type="SUPFAM" id="SSF50729">
    <property type="entry name" value="PH domain-like"/>
    <property type="match status" value="1"/>
</dbReference>
<dbReference type="SUPFAM" id="SSF56112">
    <property type="entry name" value="Protein kinase-like (PK-like)"/>
    <property type="match status" value="1"/>
</dbReference>
<dbReference type="SUPFAM" id="SSF47031">
    <property type="entry name" value="Second domain of FERM"/>
    <property type="match status" value="1"/>
</dbReference>
<dbReference type="SUPFAM" id="SSF54236">
    <property type="entry name" value="Ubiquitin-like"/>
    <property type="match status" value="1"/>
</dbReference>
<dbReference type="PROSITE" id="PS50057">
    <property type="entry name" value="FERM_3"/>
    <property type="match status" value="1"/>
</dbReference>
<dbReference type="PROSITE" id="PS00107">
    <property type="entry name" value="PROTEIN_KINASE_ATP"/>
    <property type="match status" value="1"/>
</dbReference>
<dbReference type="PROSITE" id="PS50011">
    <property type="entry name" value="PROTEIN_KINASE_DOM"/>
    <property type="match status" value="1"/>
</dbReference>
<dbReference type="PROSITE" id="PS00109">
    <property type="entry name" value="PROTEIN_KINASE_TYR"/>
    <property type="match status" value="1"/>
</dbReference>
<evidence type="ECO:0000250" key="1"/>
<evidence type="ECO:0000250" key="2">
    <source>
        <dbReference type="UniProtKB" id="P70600"/>
    </source>
</evidence>
<evidence type="ECO:0000250" key="3">
    <source>
        <dbReference type="UniProtKB" id="Q9QVP9"/>
    </source>
</evidence>
<evidence type="ECO:0000255" key="4">
    <source>
        <dbReference type="PROSITE-ProRule" id="PRU00084"/>
    </source>
</evidence>
<evidence type="ECO:0000255" key="5">
    <source>
        <dbReference type="PROSITE-ProRule" id="PRU00159"/>
    </source>
</evidence>
<evidence type="ECO:0000255" key="6">
    <source>
        <dbReference type="PROSITE-ProRule" id="PRU10028"/>
    </source>
</evidence>
<evidence type="ECO:0000256" key="7">
    <source>
        <dbReference type="SAM" id="MobiDB-lite"/>
    </source>
</evidence>
<evidence type="ECO:0000269" key="8">
    <source>
    </source>
</evidence>
<evidence type="ECO:0000269" key="9">
    <source>
    </source>
</evidence>
<evidence type="ECO:0000269" key="10">
    <source>
    </source>
</evidence>
<evidence type="ECO:0000269" key="11">
    <source>
    </source>
</evidence>
<evidence type="ECO:0000269" key="12">
    <source>
    </source>
</evidence>
<evidence type="ECO:0000269" key="13">
    <source>
    </source>
</evidence>
<evidence type="ECO:0000269" key="14">
    <source>
    </source>
</evidence>
<evidence type="ECO:0000269" key="15">
    <source>
    </source>
</evidence>
<evidence type="ECO:0000269" key="16">
    <source>
    </source>
</evidence>
<evidence type="ECO:0000269" key="17">
    <source>
    </source>
</evidence>
<evidence type="ECO:0000269" key="18">
    <source>
    </source>
</evidence>
<evidence type="ECO:0000269" key="19">
    <source>
    </source>
</evidence>
<evidence type="ECO:0000269" key="20">
    <source>
    </source>
</evidence>
<evidence type="ECO:0000269" key="21">
    <source>
    </source>
</evidence>
<evidence type="ECO:0000269" key="22">
    <source>
    </source>
</evidence>
<evidence type="ECO:0000269" key="23">
    <source>
    </source>
</evidence>
<evidence type="ECO:0000269" key="24">
    <source>
    </source>
</evidence>
<evidence type="ECO:0000269" key="25">
    <source>
    </source>
</evidence>
<evidence type="ECO:0000269" key="26">
    <source>
    </source>
</evidence>
<evidence type="ECO:0000269" key="27">
    <source>
    </source>
</evidence>
<evidence type="ECO:0000269" key="28">
    <source>
    </source>
</evidence>
<evidence type="ECO:0000269" key="29">
    <source>
    </source>
</evidence>
<evidence type="ECO:0000269" key="30">
    <source>
    </source>
</evidence>
<evidence type="ECO:0000269" key="31">
    <source>
    </source>
</evidence>
<evidence type="ECO:0000269" key="32">
    <source>
    </source>
</evidence>
<evidence type="ECO:0000269" key="33">
    <source>
    </source>
</evidence>
<evidence type="ECO:0000269" key="34">
    <source>
    </source>
</evidence>
<evidence type="ECO:0000269" key="35">
    <source>
    </source>
</evidence>
<evidence type="ECO:0000269" key="36">
    <source>
    </source>
</evidence>
<evidence type="ECO:0000269" key="37">
    <source>
    </source>
</evidence>
<evidence type="ECO:0000269" key="38">
    <source>
    </source>
</evidence>
<evidence type="ECO:0000269" key="39">
    <source>
    </source>
</evidence>
<evidence type="ECO:0000269" key="40">
    <source>
    </source>
</evidence>
<evidence type="ECO:0000269" key="41">
    <source>
    </source>
</evidence>
<evidence type="ECO:0000303" key="42">
    <source>
    </source>
</evidence>
<evidence type="ECO:0000305" key="43"/>
<evidence type="ECO:0007744" key="44">
    <source>
        <dbReference type="PDB" id="3FZP"/>
    </source>
</evidence>
<evidence type="ECO:0007744" key="45">
    <source>
    </source>
</evidence>
<evidence type="ECO:0007744" key="46">
    <source>
    </source>
</evidence>
<evidence type="ECO:0007744" key="47">
    <source>
    </source>
</evidence>
<evidence type="ECO:0007744" key="48">
    <source>
    </source>
</evidence>
<evidence type="ECO:0007829" key="49">
    <source>
        <dbReference type="PDB" id="3CC6"/>
    </source>
</evidence>
<evidence type="ECO:0007829" key="50">
    <source>
        <dbReference type="PDB" id="3FZO"/>
    </source>
</evidence>
<evidence type="ECO:0007829" key="51">
    <source>
        <dbReference type="PDB" id="3FZR"/>
    </source>
</evidence>
<evidence type="ECO:0007829" key="52">
    <source>
        <dbReference type="PDB" id="3GM3"/>
    </source>
</evidence>
<evidence type="ECO:0007829" key="53">
    <source>
        <dbReference type="PDB" id="4EKU"/>
    </source>
</evidence>
<evidence type="ECO:0007829" key="54">
    <source>
        <dbReference type="PDB" id="4XEK"/>
    </source>
</evidence>
<evidence type="ECO:0007829" key="55">
    <source>
        <dbReference type="PDB" id="5TO8"/>
    </source>
</evidence>
<sequence>MSGVSEPLSRVKLGTLRRPEGPAEPMVVVPVDVEKEDVRILKVCFYSNSFNPGKNFKLVKCTVQTEIREIITSILLSGRIGPNIRLAECYGLRLKHMKSDEIHWLHPQMTVGEVQDKYECLHVEAEWRYDLQIRYLPEDFMESLKEDRTTLLYFYQQLRNDYMQRYASKVSEGMALQLGCLELRRFFKDMPHNALDKKSNFELLEKEVGLDLFFPKQMQENLKPKQFRKMIQQTFQQYASLREEECVMKFFNTLAGFANIDQETYRCELIQGWNITVDLVIGPKGIRQLTSQDAKPTCLAEFKQIRSIRCLPLEEGQAVLQLGIEGAPQALSIKTSSLAEAENMADLIDGYCRLQGEHQGSLIIHPRKDGEKRNSLPQIPMLNLEARRSHLSESCSIESDIYAEIPDETLRRPGGPQYGIAREDVVLNRILGEGFFGEVYEGVYTNHKGEKINVAVKTCKKDCTLDNKEKFMSEAVIMKNLDHPHIVKLIGIIEEEPTWIIMELYPYGELGHYLERNKNSLKVLTLVLYSLQICKAMAYLESINCVHRDIAVRNILVASPECVKLGDFGLSRYIEDEDYYKASVTRLPIKWMSPESINFRRFTTASDVWMFAVCMWEILSFGKQPFFWLENKDVIGVLEKGDRLPKPDLCPPVLYTLMTRCWDYDPSDRPRFTELVCSLSDVYQMEKDIAMEQERNARYRTPKILEPTAFQEPPPKPSRPKYRPPPQTNLLAPKLQFQVPEGLCASSPTLTSPMEYPSPVNSLHTPPLHRHNVFKRHSMREEDFIQPSSREEAQQLWEAEKVKMRQILDKQQKQMVEDYQWLRQEEKSLDPMVYMNDKSPLTPEKEVGYLEFTGPPQKPPRLGAQSIQPTANLDRTDDLVYLNVMELVRAVLELKNELCQLPPEGYVVVVKNVGLTLRKLIGSVDDLLPSLPSSSRTEIEGTQKLLNKDLAELINKMRLAQQNAVTSLSEECKRQMLTASHTLAVDAKNLLDAVDQAKVLANLAHPPAE</sequence>
<reference key="1">
    <citation type="journal article" date="1995" name="Nature">
        <title>Protein tyrosine kinase PYK2 involved in Ca(2+)-induced regulation of ion channel and MAP kinase functions.</title>
        <authorList>
            <person name="Lev S."/>
            <person name="Moreno H."/>
            <person name="Martinez R."/>
            <person name="Canoll P."/>
            <person name="Peles E."/>
            <person name="Musacchio J.M."/>
            <person name="Plowman G.D."/>
            <person name="Rudy B."/>
            <person name="Schlessinger J."/>
        </authorList>
    </citation>
    <scope>NUCLEOTIDE SEQUENCE [MRNA] (ISOFORM 1)</scope>
    <scope>FUNCTION IN REGULATION OF POTASSIUM CHANNELS; PHOSPHORYLATION OF KCNA2 AND SHC1 AND ACTIVATION OF MAPK1/ERK2</scope>
    <scope>INTERACTION WITH GRB2</scope>
    <scope>TISSUE SPECIFICITY</scope>
    <source>
        <tissue>Brain</tissue>
    </source>
</reference>
<reference key="2">
    <citation type="journal article" date="1996" name="Genomics">
        <title>Molecular cloning and assignment of FAK2, a novel human focal adhesion kinase, to 8p11.2-p22 by nonisotopic in situ hybridization.</title>
        <authorList>
            <person name="Herzog H."/>
            <person name="Nicholl J."/>
            <person name="Hort Y.J."/>
            <person name="Sutherland G.R."/>
            <person name="Shine J."/>
        </authorList>
    </citation>
    <scope>NUCLEOTIDE SEQUENCE [MRNA] (ISOFORM 1)</scope>
    <source>
        <tissue>Hippocampus</tissue>
    </source>
</reference>
<reference key="3">
    <citation type="journal article" date="1995" name="J. Biol. Chem.">
        <title>Cloning and characterization of cell adhesion kinase beta, a novel protein-tyrosine kinase of the focal adhesion kinase subfamily.</title>
        <authorList>
            <person name="Sasaki H."/>
            <person name="Nagura K."/>
            <person name="Ishino M."/>
            <person name="Tobioka H."/>
            <person name="Kotani K."/>
            <person name="Sasaki T."/>
        </authorList>
    </citation>
    <scope>NUCLEOTIDE SEQUENCE [MRNA] (ISOFORM 1)</scope>
    <source>
        <tissue>Hippocampus</tissue>
    </source>
</reference>
<reference key="4">
    <citation type="journal article" date="1995" name="J. Biol. Chem.">
        <title>Identification and characterization of a novel related adhesion focal tyrosine kinase (RAFTK) from megakaryocytes and brain.</title>
        <authorList>
            <person name="Avraham S."/>
            <person name="London R."/>
            <person name="Fu Y."/>
            <person name="Ota S."/>
            <person name="Hiregowdara D."/>
            <person name="Li J."/>
            <person name="Jiang S."/>
            <person name="Pasztor L.M."/>
            <person name="White R.A."/>
            <person name="Groopman J.E."/>
            <person name="Avraham H."/>
        </authorList>
    </citation>
    <scope>NUCLEOTIDE SEQUENCE [MRNA] (ISOFORM 1)</scope>
</reference>
<reference key="5">
    <citation type="journal article" date="1998" name="J. Biol. Chem.">
        <title>A calcium-dependent tyrosine kinase splice variant in human monocytes. Activation by a two-stage process involving adherence and a subsequent intracellular signal.</title>
        <authorList>
            <person name="Li X."/>
            <person name="Hunter D."/>
            <person name="Morris J."/>
            <person name="Haskill J.S."/>
            <person name="Earp H.S."/>
        </authorList>
    </citation>
    <scope>NUCLEOTIDE SEQUENCE [MRNA] (ISOFORM 2)</scope>
    <scope>PHOSPHORYLATION</scope>
    <scope>TISSUE SPECIFICITY</scope>
    <source>
        <tissue>Monocyte</tissue>
    </source>
</reference>
<reference key="6">
    <citation type="journal article" date="2006" name="Nature">
        <title>DNA sequence and analysis of human chromosome 8.</title>
        <authorList>
            <person name="Nusbaum C."/>
            <person name="Mikkelsen T.S."/>
            <person name="Zody M.C."/>
            <person name="Asakawa S."/>
            <person name="Taudien S."/>
            <person name="Garber M."/>
            <person name="Kodira C.D."/>
            <person name="Schueler M.G."/>
            <person name="Shimizu A."/>
            <person name="Whittaker C.A."/>
            <person name="Chang J.L."/>
            <person name="Cuomo C.A."/>
            <person name="Dewar K."/>
            <person name="FitzGerald M.G."/>
            <person name="Yang X."/>
            <person name="Allen N.R."/>
            <person name="Anderson S."/>
            <person name="Asakawa T."/>
            <person name="Blechschmidt K."/>
            <person name="Bloom T."/>
            <person name="Borowsky M.L."/>
            <person name="Butler J."/>
            <person name="Cook A."/>
            <person name="Corum B."/>
            <person name="DeArellano K."/>
            <person name="DeCaprio D."/>
            <person name="Dooley K.T."/>
            <person name="Dorris L. III"/>
            <person name="Engels R."/>
            <person name="Gloeckner G."/>
            <person name="Hafez N."/>
            <person name="Hagopian D.S."/>
            <person name="Hall J.L."/>
            <person name="Ishikawa S.K."/>
            <person name="Jaffe D.B."/>
            <person name="Kamat A."/>
            <person name="Kudoh J."/>
            <person name="Lehmann R."/>
            <person name="Lokitsang T."/>
            <person name="Macdonald P."/>
            <person name="Major J.E."/>
            <person name="Matthews C.D."/>
            <person name="Mauceli E."/>
            <person name="Menzel U."/>
            <person name="Mihalev A.H."/>
            <person name="Minoshima S."/>
            <person name="Murayama Y."/>
            <person name="Naylor J.W."/>
            <person name="Nicol R."/>
            <person name="Nguyen C."/>
            <person name="O'Leary S.B."/>
            <person name="O'Neill K."/>
            <person name="Parker S.C.J."/>
            <person name="Polley A."/>
            <person name="Raymond C.K."/>
            <person name="Reichwald K."/>
            <person name="Rodriguez J."/>
            <person name="Sasaki T."/>
            <person name="Schilhabel M."/>
            <person name="Siddiqui R."/>
            <person name="Smith C.L."/>
            <person name="Sneddon T.P."/>
            <person name="Talamas J.A."/>
            <person name="Tenzin P."/>
            <person name="Topham K."/>
            <person name="Venkataraman V."/>
            <person name="Wen G."/>
            <person name="Yamazaki S."/>
            <person name="Young S.K."/>
            <person name="Zeng Q."/>
            <person name="Zimmer A.R."/>
            <person name="Rosenthal A."/>
            <person name="Birren B.W."/>
            <person name="Platzer M."/>
            <person name="Shimizu N."/>
            <person name="Lander E.S."/>
        </authorList>
    </citation>
    <scope>NUCLEOTIDE SEQUENCE [LARGE SCALE GENOMIC DNA]</scope>
</reference>
<reference key="7">
    <citation type="submission" date="2005-09" db="EMBL/GenBank/DDBJ databases">
        <authorList>
            <person name="Mural R.J."/>
            <person name="Istrail S."/>
            <person name="Sutton G.G."/>
            <person name="Florea L."/>
            <person name="Halpern A.L."/>
            <person name="Mobarry C.M."/>
            <person name="Lippert R."/>
            <person name="Walenz B."/>
            <person name="Shatkay H."/>
            <person name="Dew I."/>
            <person name="Miller J.R."/>
            <person name="Flanigan M.J."/>
            <person name="Edwards N.J."/>
            <person name="Bolanos R."/>
            <person name="Fasulo D."/>
            <person name="Halldorsson B.V."/>
            <person name="Hannenhalli S."/>
            <person name="Turner R."/>
            <person name="Yooseph S."/>
            <person name="Lu F."/>
            <person name="Nusskern D.R."/>
            <person name="Shue B.C."/>
            <person name="Zheng X.H."/>
            <person name="Zhong F."/>
            <person name="Delcher A.L."/>
            <person name="Huson D.H."/>
            <person name="Kravitz S.A."/>
            <person name="Mouchard L."/>
            <person name="Reinert K."/>
            <person name="Remington K.A."/>
            <person name="Clark A.G."/>
            <person name="Waterman M.S."/>
            <person name="Eichler E.E."/>
            <person name="Adams M.D."/>
            <person name="Hunkapiller M.W."/>
            <person name="Myers E.W."/>
            <person name="Venter J.C."/>
        </authorList>
    </citation>
    <scope>NUCLEOTIDE SEQUENCE [LARGE SCALE GENOMIC DNA]</scope>
</reference>
<reference key="8">
    <citation type="journal article" date="2004" name="Genome Res.">
        <title>The status, quality, and expansion of the NIH full-length cDNA project: the Mammalian Gene Collection (MGC).</title>
        <authorList>
            <consortium name="The MGC Project Team"/>
        </authorList>
    </citation>
    <scope>NUCLEOTIDE SEQUENCE [LARGE SCALE MRNA] (ISOFORM 1)</scope>
    <source>
        <tissue>Lymph</tissue>
        <tissue>Testis</tissue>
    </source>
</reference>
<reference key="9">
    <citation type="journal article" date="1996" name="Nature">
        <title>A role for Pyk2 and Src in linking G-protein-coupled receptors with MAP kinase activation.</title>
        <authorList>
            <person name="Dikic I."/>
            <person name="Tokiwa G."/>
            <person name="Lev S."/>
            <person name="Courtneidge S.A."/>
            <person name="Schlessinger J."/>
        </authorList>
    </citation>
    <scope>FUNCTION IN PHOSPHORYLATION OF SRC AND ACTIVATION OF THE MAP KINASE SIGNALING CASCADE</scope>
    <scope>INTERACTION WITH SRC</scope>
    <scope>AUTOPHOSPHORYLATION</scope>
    <scope>MUTAGENESIS OF TYR-402</scope>
</reference>
<reference key="10">
    <citation type="journal article" date="1996" name="Science">
        <title>Activation of Pyk2 by stress signals and coupling with JNK signaling pathway.</title>
        <authorList>
            <person name="Tokiwa G."/>
            <person name="Dikic I."/>
            <person name="Lev S."/>
            <person name="Schlessinger J."/>
        </authorList>
    </citation>
    <scope>FUNCTION IN TNF SIGNALING AND ACTIVATION OF MAPK8/JNK1</scope>
</reference>
<reference key="11">
    <citation type="journal article" date="1998" name="J. Biol. Chem.">
        <title>Cell adhesion kinase beta forms a complex with a new member, Hic-5, of proteins localized at focal adhesions.</title>
        <authorList>
            <person name="Matsuya M."/>
            <person name="Sasaki H."/>
            <person name="Aoto H."/>
            <person name="Mitaka T."/>
            <person name="Nagura K."/>
            <person name="Ohba T."/>
            <person name="Ishino M."/>
            <person name="Takahashi S."/>
            <person name="Suzuki R."/>
            <person name="Sasaki T."/>
        </authorList>
    </citation>
    <scope>INTERACTION WITH TGFB1I1</scope>
</reference>
<reference key="12">
    <citation type="journal article" date="1999" name="Mol. Cell. Biol.">
        <title>Identification of a new Pyk2 target protein with Arf-GAP activity.</title>
        <authorList>
            <person name="Andreev J."/>
            <person name="Simon J.-P."/>
            <person name="Sabatini D.D."/>
            <person name="Kam J."/>
            <person name="Plowman G."/>
            <person name="Randazzo P.A."/>
            <person name="Schlessinger J."/>
        </authorList>
    </citation>
    <scope>INTERACTION WITH ASAP2</scope>
    <scope>FUNCTION</scope>
</reference>
<reference key="13">
    <citation type="journal article" date="2000" name="J. Cell Biol.">
        <title>Suppression of Pyk2 kinase and cellular activities by FIP200.</title>
        <authorList>
            <person name="Ueda H."/>
            <person name="Abbi S."/>
            <person name="Zheng C."/>
            <person name="Guan J.-L."/>
        </authorList>
    </citation>
    <scope>INTERACTION WITH RB1CC1</scope>
</reference>
<reference key="14">
    <citation type="journal article" date="2001" name="Proc. Natl. Acad. Sci. U.S.A.">
        <title>Nephrocystin interacts with Pyk2, p130(Cas), and tensin and triggers phosphorylation of Pyk2.</title>
        <authorList>
            <person name="Benzing T."/>
            <person name="Gerke P."/>
            <person name="Hoepker K."/>
            <person name="Hildebrandt F."/>
            <person name="Kim E."/>
            <person name="Walz G."/>
        </authorList>
    </citation>
    <scope>PHOSPHORYLATION AT TYR-402</scope>
    <scope>MUTAGENESIS OF PRO-859</scope>
    <scope>INTERACTION WITH NPHP1</scope>
</reference>
<reference key="15">
    <citation type="journal article" date="2003" name="J. Biol. Chem.">
        <title>The tyrosine kinase Pyk2 regulates Arf1 activity by phosphorylation and inhibition of the Arf-GTPase-activating protein ASAP1.</title>
        <authorList>
            <person name="Kruljac-Letunic A."/>
            <person name="Moelleken J."/>
            <person name="Kallin A."/>
            <person name="Wieland F."/>
            <person name="Blaukat A."/>
        </authorList>
    </citation>
    <scope>FUNCTION IN ASAP1 PHOSPHORYLATION AND REGULATION OF ASAP1 ACTIVITY</scope>
    <scope>INTERACTION WITH ASAP1</scope>
</reference>
<reference key="16">
    <citation type="journal article" date="2003" name="J. Biol. Chem.">
        <title>Identification and characterization of a novel Pyk2/related adhesion focal tyrosine kinase-associated protein that inhibits alpha-synuclein phosphorylation.</title>
        <authorList>
            <person name="Takahashi T."/>
            <person name="Yamashita H."/>
            <person name="Nagano Y."/>
            <person name="Nakamura T."/>
            <person name="Ohmori H."/>
            <person name="Avraham H."/>
            <person name="Avraham S."/>
            <person name="Yasuda M."/>
            <person name="Matsumoto M."/>
        </authorList>
    </citation>
    <scope>INTERACTION WITH SKAP2</scope>
    <scope>SUBCELLULAR LOCATION</scope>
    <scope>FUNCTION</scope>
</reference>
<reference key="17">
    <citation type="journal article" date="2003" name="Mol. Cell. Biol.">
        <title>Pyk2- and Src-dependent tyrosine phosphorylation of PDK1 regulates focal adhesions.</title>
        <authorList>
            <person name="Taniyama Y."/>
            <person name="Weber D.S."/>
            <person name="Rocic P."/>
            <person name="Hilenski L."/>
            <person name="Akers M.L."/>
            <person name="Park J."/>
            <person name="Hemmings B.A."/>
            <person name="Alexander R.W."/>
            <person name="Griendling K.K."/>
        </authorList>
    </citation>
    <scope>FUNCTION</scope>
    <scope>INTERACTION WITH PDPK1</scope>
    <scope>SUBCELLULAR LOCATION</scope>
</reference>
<reference key="18">
    <citation type="journal article" date="2003" name="Proc. Natl. Acad. Sci. U.S.A.">
        <title>Profiling of tyrosine phosphorylation pathways in human cells using mass spectrometry.</title>
        <authorList>
            <person name="Salomon A.R."/>
            <person name="Ficarro S.B."/>
            <person name="Brill L.M."/>
            <person name="Brinker A."/>
            <person name="Phung Q.T."/>
            <person name="Ericson C."/>
            <person name="Sauer K."/>
            <person name="Brock A."/>
            <person name="Horn D.M."/>
            <person name="Schultz P.G."/>
            <person name="Peters E.C."/>
        </authorList>
    </citation>
    <scope>IDENTIFICATION BY MASS SPECTROMETRY [LARGE SCALE ANALYSIS]</scope>
</reference>
<reference key="19">
    <citation type="journal article" date="2004" name="Exp. Hematol.">
        <title>Integrin engagement-induced inhibition of human myelopoiesis is mediated by proline-rich tyrosine kinase 2 gene products.</title>
        <authorList>
            <person name="Dylla S.J."/>
            <person name="Deyle D.R."/>
            <person name="Theunissen K."/>
            <person name="Padurean A.M."/>
            <person name="Verfaillie C.M."/>
        </authorList>
    </citation>
    <scope>FUNCTION IN INTEGRIN SIGNALING AND IN REGULATION OF CELL PROLIFERATION</scope>
    <scope>CATALYTIC ACTIVITY</scope>
    <scope>CHARACTERIZATION OF ISOFORM 2</scope>
</reference>
<reference key="20">
    <citation type="journal article" date="2004" name="J. Biol. Chem.">
        <title>RAFTK/Pyk2 activation is mediated by trans-acting autophosphorylation in a Src-independent manner.</title>
        <authorList>
            <person name="Park S.Y."/>
            <person name="Avraham H.K."/>
            <person name="Avraham S."/>
        </authorList>
    </citation>
    <scope>PHOSPHORYLATION AT TYR-402</scope>
    <scope>CATALYTIC ACTIVITY</scope>
    <scope>FUNCTION IN SRC-MEDIATED PHOSPHORYLATION OF PXN</scope>
    <scope>MUTAGENESIS OF LYS-457</scope>
</reference>
<reference key="21">
    <citation type="journal article" date="2007" name="Am. J. Physiol.">
        <title>Interaction of Pyk2 and PTP-PEST with leupaxin in prostate cancer cells.</title>
        <authorList>
            <person name="Sahu S.N."/>
            <person name="Nunez S."/>
            <person name="Bai G."/>
            <person name="Gupta A."/>
        </authorList>
    </citation>
    <scope>INTERACTION WITH LPXN AND PTPN12</scope>
    <scope>PHOSPHORYLATION AT TYR-402</scope>
    <scope>DEPHOSPHORYLATION BY PTPN12</scope>
</reference>
<reference key="22">
    <citation type="journal article" date="2007" name="Eur. J. Immunol.">
        <title>Ephrin-A1 stimulates migration of CD8+CCR7+ T lymphocytes.</title>
        <authorList>
            <person name="Hjorthaug H.S."/>
            <person name="Aasheim H.C."/>
        </authorList>
    </citation>
    <scope>FUNCTION IN MIGRATION OF T-LYMPHOCYTES</scope>
    <scope>INTERACTION WITH EPHA1; LCK AND PI3-KINASE</scope>
</reference>
<reference key="23">
    <citation type="journal article" date="2008" name="Cancer Res.">
        <title>Antitumor activity and pharmacology of a selective focal adhesion kinase inhibitor, PF-562,271.</title>
        <authorList>
            <person name="Roberts W.G."/>
            <person name="Ung E."/>
            <person name="Whalen P."/>
            <person name="Cooper B."/>
            <person name="Hulford C."/>
            <person name="Autry C."/>
            <person name="Richter D."/>
            <person name="Emerson E."/>
            <person name="Lin J."/>
            <person name="Kath J."/>
            <person name="Coleman K."/>
            <person name="Yao L."/>
            <person name="Martinez-Alsina L."/>
            <person name="Lorenzen M."/>
            <person name="Berliner M."/>
            <person name="Luzzio M."/>
            <person name="Patel N."/>
            <person name="Schmitt E."/>
            <person name="LaGreca S."/>
            <person name="Jani J."/>
            <person name="Wessel M."/>
            <person name="Marr E."/>
            <person name="Griffor M."/>
            <person name="Vajdos F."/>
        </authorList>
    </citation>
    <scope>CATALYTIC ACTIVITY</scope>
    <scope>ACTIVITY REGULATION</scope>
    <scope>ROLE IN DISEASE</scope>
</reference>
<reference key="24">
    <citation type="journal article" date="2008" name="Carcinogenesis">
        <title>Proline-rich tyrosine kinase 2 (Pyk2) promotes proliferation and invasiveness of hepatocellular carcinoma cells through c-Src/ERK activation.</title>
        <authorList>
            <person name="Sun C.K."/>
            <person name="Man K."/>
            <person name="Ng K.T."/>
            <person name="Ho J.W."/>
            <person name="Lim Z.X."/>
            <person name="Cheng Q."/>
            <person name="Lo C.M."/>
            <person name="Poon R.T."/>
            <person name="Fan S.T."/>
        </authorList>
    </citation>
    <scope>FUNCTION IN CELL ADHESION; MIGRATION; PROLIFERATION; REGULATION OF ACTIN FIBER POLYMERIZATION AND IN ACTIVATION OF SRC; MAPK1/ERK2 AND MAPK3/ERK1</scope>
    <scope>INTERACTION WITH SRC</scope>
    <scope>SUBCELLULAR LOCATION</scope>
    <scope>ROLE IN DISEASE</scope>
</reference>
<reference key="25">
    <citation type="journal article" date="2008" name="J. Proteome Res.">
        <title>Phosphoproteome of resting human platelets.</title>
        <authorList>
            <person name="Zahedi R.P."/>
            <person name="Lewandrowski U."/>
            <person name="Wiesner J."/>
            <person name="Wortelkamp S."/>
            <person name="Moebius J."/>
            <person name="Schuetz C."/>
            <person name="Walter U."/>
            <person name="Gambaryan S."/>
            <person name="Sickmann A."/>
        </authorList>
    </citation>
    <scope>PHOSPHORYLATION [LARGE SCALE ANALYSIS] AT SER-375</scope>
    <scope>IDENTIFICATION BY MASS SPECTROMETRY [LARGE SCALE ANALYSIS]</scope>
    <source>
        <tissue>Platelet</tissue>
    </source>
</reference>
<reference key="26">
    <citation type="journal article" date="2008" name="Mol. Cell">
        <title>Kinase-selective enrichment enables quantitative phosphoproteomics of the kinome across the cell cycle.</title>
        <authorList>
            <person name="Daub H."/>
            <person name="Olsen J.V."/>
            <person name="Bairlein M."/>
            <person name="Gnad F."/>
            <person name="Oppermann F.S."/>
            <person name="Korner R."/>
            <person name="Greff Z."/>
            <person name="Keri G."/>
            <person name="Stemmann O."/>
            <person name="Mann M."/>
        </authorList>
    </citation>
    <scope>PHOSPHORYLATION [LARGE SCALE ANALYSIS] AT SER-375; THR-765; SER-839 AND THR-842</scope>
    <scope>IDENTIFICATION BY MASS SPECTROMETRY [LARGE SCALE ANALYSIS]</scope>
    <source>
        <tissue>Cervix carcinoma</tissue>
    </source>
</reference>
<reference key="27">
    <citation type="journal article" date="2008" name="Mol. Cell. Biol.">
        <title>The atypical Rho GTPase Wrch1 collaborates with the nonreceptor tyrosine kinases Pyk2 and Src in regulating cytoskeletal dynamics.</title>
        <authorList>
            <person name="Ruusala A."/>
            <person name="Aspenstrom P."/>
        </authorList>
    </citation>
    <scope>INTERACTION WITH RHOU</scope>
    <scope>FUNCTION IN REORGANIZATION OF ACTIN CYTOSKELETON AND SRC-MEDIATED RHOU PHOSPHORYLATION</scope>
</reference>
<reference key="28">
    <citation type="journal article" date="2008" name="Nat. Immunol.">
        <title>Nonmuscle myosin light-chain kinase mediates neutrophil transmigration in sepsis-induced lung inflammation by activating beta2 integrins.</title>
        <authorList>
            <person name="Xu J."/>
            <person name="Gao X.-P."/>
            <person name="Ramchandran R."/>
            <person name="Zhao Y.-Y."/>
            <person name="Vogel S.M."/>
            <person name="Malik A.B."/>
        </authorList>
    </citation>
    <scope>FUNCTION DURING LUNG INJURY</scope>
    <scope>PHOSPHORYLATION BY MYLK</scope>
    <scope>INTERACTION WITH MYLK</scope>
</reference>
<reference key="29">
    <citation type="journal article" date="2009" name="Biochem. J.">
        <title>A Pyk2-Vav1 complex is recruited to beta3-adhesion sites to initiate Rho activation.</title>
        <authorList>
            <person name="Gao C."/>
            <person name="Blystone S.D."/>
        </authorList>
    </citation>
    <scope>FUNCTION IN REGULATION OF ACTIN CYTOSKELETON REORGANIZATION AND ACTIVATION OF RHO FAMILY GTPASES</scope>
    <scope>PHOSPHORYLATION AT TYR-402</scope>
    <scope>SUBCELLULAR LOCATION</scope>
    <scope>INTERACTION WITH VAV1</scope>
</reference>
<reference key="30">
    <citation type="journal article" date="2009" name="Bioorg. Med. Chem. Lett.">
        <title>Identification of small molecule inhibitors of proline-rich tyrosine kinase 2 (Pyk2) with osteogenic activity in osteoblast cells.</title>
        <authorList>
            <person name="Allen J.G."/>
            <person name="Lee M.R."/>
            <person name="Han C.Y."/>
            <person name="Scherrer J."/>
            <person name="Flynn S."/>
            <person name="Boucher C."/>
            <person name="Zhao H."/>
            <person name="O'Connor A.B."/>
            <person name="Roveto P."/>
            <person name="Bauer D."/>
            <person name="Graceffa R."/>
            <person name="Richards W.G."/>
            <person name="Babij P."/>
        </authorList>
    </citation>
    <scope>ROLE IN DISEASE</scope>
    <scope>CATALYTIC ACTIVITY</scope>
    <scope>ACTIVITY REGULATION</scope>
</reference>
<reference key="31">
    <citation type="journal article" date="2009" name="J. Cell. Physiol.">
        <title>Pyk2 mediates endothelin-1 signaling via p130Cas/BCAR3 cascade and regulates human glomerular mesangial cell adhesion and spreading.</title>
        <authorList>
            <person name="Rufanova V.A."/>
            <person name="Alexanian A."/>
            <person name="Wakatsuki T."/>
            <person name="Lerner A."/>
            <person name="Sorokin A."/>
        </authorList>
    </citation>
    <scope>FUNCTION IN CELL ADHESION AND SPREADING</scope>
    <scope>AUTOPHOSPHORYLATION</scope>
    <scope>INTERACTION WITH BCAR1</scope>
</reference>
<reference key="32">
    <citation type="journal article" date="2009" name="Mol. Cell. Proteomics">
        <title>Large-scale proteomics analysis of the human kinome.</title>
        <authorList>
            <person name="Oppermann F.S."/>
            <person name="Gnad F."/>
            <person name="Olsen J.V."/>
            <person name="Hornberger R."/>
            <person name="Greff Z."/>
            <person name="Keri G."/>
            <person name="Mann M."/>
            <person name="Daub H."/>
        </authorList>
    </citation>
    <scope>PHOSPHORYLATION [LARGE SCALE ANALYSIS] AT SER-361; SER-375; SER-399; TYR-722; SER-762; TYR-819; TYR-834; SER-839; THR-842; TYR-849 AND SER-866</scope>
    <scope>VARIANT [LARGE SCALE ANALYSIS] THR-838</scope>
    <scope>IDENTIFICATION BY MASS SPECTROMETRY [LARGE SCALE ANALYSIS]</scope>
</reference>
<reference key="33">
    <citation type="journal article" date="2010" name="Cell. Mol. Life Sci.">
        <title>Recruitment of Pyk2 to SHPS-1 signaling complex is required for IGF-I-dependent mitogenic signaling in vascular smooth muscle cells.</title>
        <authorList>
            <person name="Shen X."/>
            <person name="Xi G."/>
            <person name="Radhakrishnan Y."/>
            <person name="Clemmons D.R."/>
        </authorList>
    </citation>
    <scope>FUNCTION IN IGF1 SIGNALING AND ACTIVATION OF MAPK1/ERK2 AND MAPK3/ERK1</scope>
    <scope>INTERACTION WITH SRC AND GRB2</scope>
    <scope>PHOSPHORYLATION AT TYR-402 AND TYR-881</scope>
    <scope>MUTAGENESIS OF TYR-881</scope>
</reference>
<reference key="34">
    <citation type="journal article" date="2010" name="J. Biol. Chem.">
        <title>Pyk2 inhibition of p53 as an adaptive and intrinsic mechanism facilitating cell proliferation and survival.</title>
        <authorList>
            <person name="Lim S.T."/>
            <person name="Miller N.L."/>
            <person name="Nam J.O."/>
            <person name="Chen X.L."/>
            <person name="Lim Y."/>
            <person name="Schlaepfer D.D."/>
        </authorList>
    </citation>
    <scope>FUNCTION IN CELL PROLIFERATION AND REGULATION OF P53/TP53 UBIQUITINATION</scope>
    <scope>SUBCELLULAR LOCATION</scope>
</reference>
<reference key="35">
    <citation type="journal article" date="2010" name="J. Leukoc. Biol.">
        <title>The T cell receptor-mediated phosphorylation of Pyk2 tyrosines 402 and 580 occurs via a distinct mechanism than other receptor systems.</title>
        <authorList>
            <person name="Collins M."/>
            <person name="Tremblay M."/>
            <person name="Chapman N."/>
            <person name="Curtiss M."/>
            <person name="Rothman P.B."/>
            <person name="Houtman J.C."/>
        </authorList>
    </citation>
    <scope>PHOSPHORYLATION AT TYR-402 AND TYR-580 BY FYN AND LCK</scope>
</reference>
<reference key="36">
    <citation type="journal article" date="2010" name="Mol. Immunol.">
        <title>T cell receptor activation leads to two distinct phases of Pyk2 activation and actin cytoskeletal rearrangement in human T cells.</title>
        <authorList>
            <person name="Collins M."/>
            <person name="Bartelt R.R."/>
            <person name="Houtman J.C."/>
        </authorList>
    </citation>
    <scope>FUNCTION IN T-CELL RECEPTOR-MEDIATED SIGNALING</scope>
    <scope>PHOSPHORYLATION AT TYR-402 AND TYR-580</scope>
</reference>
<reference key="37">
    <citation type="journal article" date="2011" name="BMC Syst. Biol.">
        <title>Initial characterization of the human central proteome.</title>
        <authorList>
            <person name="Burkard T.R."/>
            <person name="Planyavsky M."/>
            <person name="Kaupe I."/>
            <person name="Breitwieser F.P."/>
            <person name="Buerckstuemmer T."/>
            <person name="Bennett K.L."/>
            <person name="Superti-Furga G."/>
            <person name="Colinge J."/>
        </authorList>
    </citation>
    <scope>IDENTIFICATION BY MASS SPECTROMETRY [LARGE SCALE ANALYSIS]</scope>
</reference>
<reference key="38">
    <citation type="journal article" date="2011" name="J. Biol. Chem.">
        <title>Nephrocystin-4 regulates Pyk2-induced tyrosine phosphorylation of nephrocystin-1 to control targeting to monocilia.</title>
        <authorList>
            <person name="Liebau M.C."/>
            <person name="Hopker K."/>
            <person name="Muller R.U."/>
            <person name="Schmedding I."/>
            <person name="Zank S."/>
            <person name="Schairer B."/>
            <person name="Fabretti F."/>
            <person name="Hohne M."/>
            <person name="Bartram M.P."/>
            <person name="Dafinger C."/>
            <person name="Hackl M."/>
            <person name="Burst V."/>
            <person name="Habbig S."/>
            <person name="Zentgraf H."/>
            <person name="Blaukat A."/>
            <person name="Walz G."/>
            <person name="Benzing T."/>
            <person name="Schermer B."/>
        </authorList>
    </citation>
    <scope>INTERACTION WITH NPHP1</scope>
    <scope>FUNCTION IN PHOSPHORYLATION OF NPHP1</scope>
</reference>
<reference key="39">
    <citation type="journal article" date="2011" name="PLoS ONE">
        <title>Proline-rich tyrosine kinase 2 (Pyk2) promotes cell motility of hepatocellular carcinoma through induction of epithelial to mesenchymal transition.</title>
        <authorList>
            <person name="Sun C.K."/>
            <person name="Ng K.T."/>
            <person name="Lim Z.X."/>
            <person name="Cheng Q."/>
            <person name="Lo C.M."/>
            <person name="Poon R.T."/>
            <person name="Man K."/>
            <person name="Wong N."/>
            <person name="Fan S.T."/>
        </authorList>
    </citation>
    <scope>FUNCTION IN REORGANIZATION OF CYTOSKELETON; FORMATION OF MEMBRANE RUFFLES AND CELL MIGRATION</scope>
    <scope>ROLE IN DISEASE</scope>
</reference>
<reference key="40">
    <citation type="journal article" date="2005" name="Immunol. Res.">
        <title>Focal adhesion kinase-related protein tyrosine kinase Pyk2 in T-cell activation and function.</title>
        <authorList>
            <person name="Ostergaard H.L."/>
            <person name="Lysechko T.L."/>
        </authorList>
    </citation>
    <scope>REVIEW ON ROLE IN IMMUNITY</scope>
</reference>
<reference key="41">
    <citation type="journal article" date="2010" name="Expert Opin. Ther. Targets">
        <title>Targeting Pyk2 for therapeutic intervention.</title>
        <authorList>
            <person name="Lipinski C.A."/>
            <person name="Loftus J.C."/>
        </authorList>
    </citation>
    <scope>REVIEW ON FUNCTION; SIGNALING; INTERACTION PARTNERS; ACTIVITY REGULATION; PHOSPHORYLATION</scope>
    <scope>ROLE IN DISEASE</scope>
</reference>
<reference key="42">
    <citation type="journal article" date="2010" name="J. Cell Sci.">
        <title>Cellular functions of FAK kinases: insight into molecular mechanisms and novel functions.</title>
        <authorList>
            <person name="Schaller M.D."/>
        </authorList>
    </citation>
    <scope>REVIEW</scope>
</reference>
<reference key="43">
    <citation type="journal article" date="2011" name="Front. Biosci.">
        <title>Redox sensitive Pyk2 as a target for therapeutics in breast cancer.</title>
        <authorList>
            <person name="Felty Q."/>
        </authorList>
    </citation>
    <scope>REVIEW ON ROLE IN DISEASE</scope>
</reference>
<reference key="44">
    <citation type="journal article" date="2013" name="J. Proteome Res.">
        <title>Toward a comprehensive characterization of a human cancer cell phosphoproteome.</title>
        <authorList>
            <person name="Zhou H."/>
            <person name="Di Palma S."/>
            <person name="Preisinger C."/>
            <person name="Peng M."/>
            <person name="Polat A.N."/>
            <person name="Heck A.J."/>
            <person name="Mohammed S."/>
        </authorList>
    </citation>
    <scope>PHOSPHORYLATION [LARGE SCALE ANALYSIS] AT SER-375 AND THR-842</scope>
    <scope>IDENTIFICATION BY MASS SPECTROMETRY [LARGE SCALE ANALYSIS]</scope>
    <source>
        <tissue>Cervix carcinoma</tissue>
        <tissue>Erythroleukemia</tissue>
    </source>
</reference>
<reference key="45">
    <citation type="journal article" date="2008" name="Bioorg. Med. Chem. Lett.">
        <title>Trifluoromethylpyrimidine-based inhibitors of proline-rich tyrosine kinase 2 (PYK2): structure-activity relationships and strategies for the elimination of reactive metabolite formation.</title>
        <authorList>
            <person name="Walker D.P."/>
            <person name="Bi F.C."/>
            <person name="Kalgutkar A.S."/>
            <person name="Bauman J.N."/>
            <person name="Zhao S.X."/>
            <person name="Soglia J.R."/>
            <person name="Aspnes G.E."/>
            <person name="Kung D.W."/>
            <person name="Klug-McLeod J."/>
            <person name="Zawistoski M.P."/>
            <person name="McGlynn M.A."/>
            <person name="Oliver R."/>
            <person name="Dunn M."/>
            <person name="Li J.C."/>
            <person name="Richter D.T."/>
            <person name="Cooper B.A."/>
            <person name="Kath J.C."/>
            <person name="Hulford C.A."/>
            <person name="Autry C.L."/>
            <person name="Luzzio M.J."/>
            <person name="Ung E.J."/>
            <person name="Roberts W.G."/>
            <person name="Bonnette P.C."/>
            <person name="Buckbinder L."/>
            <person name="Mistry A."/>
            <person name="Griffor M.C."/>
            <person name="Han S."/>
            <person name="Guzman-Perez A."/>
        </authorList>
    </citation>
    <scope>X-RAY CRYSTALLOGRAPHY (2.7 ANGSTROMS) OF 416-692 IN COMPLEX WITH PF-2318841</scope>
    <scope>CATALYTIC ACTIVITY</scope>
    <scope>ACTIVITY REGULATION</scope>
</reference>
<reference key="46">
    <citation type="journal article" date="2009" name="Biochem. Biophys. Res. Commun.">
        <title>Crystal structures of free and ligand-bound focal adhesion targeting domain of Pyk2.</title>
        <authorList>
            <person name="Lulo J."/>
            <person name="Yuzawa S."/>
            <person name="Schlessinger J."/>
        </authorList>
    </citation>
    <scope>X-RAY CRYSTALLOGRAPHY (2.6 ANGSTROMS) OF 861-1009 IN COMPLEX WITH PXN</scope>
    <scope>INTERACTION WITH PXN</scope>
</reference>
<reference key="47">
    <citation type="journal article" date="2009" name="Bioorg. Med. Chem. Lett.">
        <title>Sulfoximine-substituted trifluoromethylpyrimidine analogs as inhibitors of proline-rich tyrosine kinase 2 (PYK2) show reduced hERG activity.</title>
        <authorList>
            <person name="Walker D.P."/>
            <person name="Zawistoski M.P."/>
            <person name="McGlynn M.A."/>
            <person name="Li J.C."/>
            <person name="Kung D.W."/>
            <person name="Bonnette P.C."/>
            <person name="Baumann A."/>
            <person name="Buckbinder L."/>
            <person name="Houser J.A."/>
            <person name="Boer J."/>
            <person name="Mistry A."/>
            <person name="Han S."/>
            <person name="Xing L."/>
            <person name="Guzman-Perez A."/>
        </authorList>
    </citation>
    <scope>X-RAY CRYSTALLOGRAPHY (2.0 ANGSTROMS) OF 416-692 IN COMPLEX WITH INHIBITOR P1E</scope>
    <scope>ROLE IN DISEASE</scope>
    <scope>CATALYTIC ACTIVITY</scope>
    <scope>ACTIVITY REGULATION</scope>
</reference>
<reference key="48">
    <citation type="journal article" date="2009" name="J. Biol. Chem.">
        <title>Structural characterization of proline-rich tyrosine kinase 2 (PYK2) reveals a unique (DFG-out) conformation and enables inhibitor design.</title>
        <authorList>
            <person name="Han S."/>
            <person name="Mistry A."/>
            <person name="Chang J.S."/>
            <person name="Cunningham D."/>
            <person name="Griffor M."/>
            <person name="Bonnette P.C."/>
            <person name="Wang H."/>
            <person name="Chrunyk B.A."/>
            <person name="Aspnes G.E."/>
            <person name="Walker D.P."/>
            <person name="Brosius A.D."/>
            <person name="Buckbinder L."/>
        </authorList>
    </citation>
    <scope>X-RAY CRYSTALLOGRAPHY (1.75 ANGSTROMS) OF 416-692 IN COMPLEXES WITH ATP ANALOG; PF-431396; BIRB796 AND PF-4618433</scope>
    <scope>ROLE IN DISEASE</scope>
</reference>
<reference key="49">
    <citation type="submission" date="2011-07" db="PDB data bank">
        <title>Structure of protein tyrosine kinase 2 beta (PTK2B) kinase domain.</title>
        <authorList>
            <consortium name="Structural genomics consortium (SGC)"/>
        </authorList>
    </citation>
    <scope>X-RAY CRYSTALLOGRAPHY (1.6 ANGSTROMS) OF 414-692</scope>
</reference>
<reference key="50">
    <citation type="journal article" date="2007" name="Nature">
        <title>Patterns of somatic mutation in human cancer genomes.</title>
        <authorList>
            <person name="Greenman C."/>
            <person name="Stephens P."/>
            <person name="Smith R."/>
            <person name="Dalgliesh G.L."/>
            <person name="Hunter C."/>
            <person name="Bignell G."/>
            <person name="Davies H."/>
            <person name="Teague J."/>
            <person name="Butler A."/>
            <person name="Stevens C."/>
            <person name="Edkins S."/>
            <person name="O'Meara S."/>
            <person name="Vastrik I."/>
            <person name="Schmidt E.E."/>
            <person name="Avis T."/>
            <person name="Barthorpe S."/>
            <person name="Bhamra G."/>
            <person name="Buck G."/>
            <person name="Choudhury B."/>
            <person name="Clements J."/>
            <person name="Cole J."/>
            <person name="Dicks E."/>
            <person name="Forbes S."/>
            <person name="Gray K."/>
            <person name="Halliday K."/>
            <person name="Harrison R."/>
            <person name="Hills K."/>
            <person name="Hinton J."/>
            <person name="Jenkinson A."/>
            <person name="Jones D."/>
            <person name="Menzies A."/>
            <person name="Mironenko T."/>
            <person name="Perry J."/>
            <person name="Raine K."/>
            <person name="Richardson D."/>
            <person name="Shepherd R."/>
            <person name="Small A."/>
            <person name="Tofts C."/>
            <person name="Varian J."/>
            <person name="Webb T."/>
            <person name="West S."/>
            <person name="Widaa S."/>
            <person name="Yates A."/>
            <person name="Cahill D.P."/>
            <person name="Louis D.N."/>
            <person name="Goldstraw P."/>
            <person name="Nicholson A.G."/>
            <person name="Brasseur F."/>
            <person name="Looijenga L."/>
            <person name="Weber B.L."/>
            <person name="Chiew Y.-E."/>
            <person name="DeFazio A."/>
            <person name="Greaves M.F."/>
            <person name="Green A.R."/>
            <person name="Campbell P."/>
            <person name="Birney E."/>
            <person name="Easton D.F."/>
            <person name="Chenevix-Trench G."/>
            <person name="Tan M.-H."/>
            <person name="Khoo S.K."/>
            <person name="Teh B.T."/>
            <person name="Yuen S.T."/>
            <person name="Leung S.Y."/>
            <person name="Wooster R."/>
            <person name="Futreal P.A."/>
            <person name="Stratton M.R."/>
        </authorList>
    </citation>
    <scope>VARIANTS [LARGE SCALE ANALYSIS] GLU-359; HIS-698; PRO-808; THR-838 AND LYS-970</scope>
</reference>